<accession>Q9H3D4</accession>
<accession>O75080</accession>
<accession>O75195</accession>
<accession>O75922</accession>
<accession>O76078</accession>
<accession>Q6VEG2</accession>
<accession>Q6VEG3</accession>
<accession>Q6VEG4</accession>
<accession>Q6VFJ1</accession>
<accession>Q6VFJ2</accession>
<accession>Q6VFJ3</accession>
<accession>Q6VH20</accession>
<accession>Q7LDI3</accession>
<accession>Q7LDI4</accession>
<accession>Q7LDI5</accession>
<accession>Q96KR0</accession>
<accession>Q9H3D2</accession>
<accession>Q9H3D3</accession>
<accession>Q9H3P8</accession>
<accession>Q9NPH7</accession>
<accession>Q9P1B4</accession>
<accession>Q9P1B5</accession>
<accession>Q9P1B6</accession>
<accession>Q9P1B7</accession>
<accession>Q9UBV9</accession>
<accession>Q9UE10</accession>
<accession>Q9UP26</accession>
<accession>Q9UP27</accession>
<accession>Q9UP28</accession>
<accession>Q9UP74</accession>
<evidence type="ECO:0000250" key="1"/>
<evidence type="ECO:0000256" key="2">
    <source>
        <dbReference type="SAM" id="MobiDB-lite"/>
    </source>
</evidence>
<evidence type="ECO:0000269" key="3">
    <source>
    </source>
</evidence>
<evidence type="ECO:0000269" key="4">
    <source>
    </source>
</evidence>
<evidence type="ECO:0000269" key="5">
    <source>
    </source>
</evidence>
<evidence type="ECO:0000269" key="6">
    <source>
    </source>
</evidence>
<evidence type="ECO:0000269" key="7">
    <source>
    </source>
</evidence>
<evidence type="ECO:0000269" key="8">
    <source>
    </source>
</evidence>
<evidence type="ECO:0000269" key="9">
    <source>
    </source>
</evidence>
<evidence type="ECO:0000269" key="10">
    <source>
    </source>
</evidence>
<evidence type="ECO:0000269" key="11">
    <source>
    </source>
</evidence>
<evidence type="ECO:0000269" key="12">
    <source>
    </source>
</evidence>
<evidence type="ECO:0000269" key="13">
    <source>
    </source>
</evidence>
<evidence type="ECO:0000269" key="14">
    <source>
    </source>
</evidence>
<evidence type="ECO:0000269" key="15">
    <source>
    </source>
</evidence>
<evidence type="ECO:0000269" key="16">
    <source>
    </source>
</evidence>
<evidence type="ECO:0000269" key="17">
    <source>
    </source>
</evidence>
<evidence type="ECO:0000269" key="18">
    <source>
    </source>
</evidence>
<evidence type="ECO:0000269" key="19">
    <source>
    </source>
</evidence>
<evidence type="ECO:0000269" key="20">
    <source>
    </source>
</evidence>
<evidence type="ECO:0000269" key="21">
    <source>
    </source>
</evidence>
<evidence type="ECO:0000269" key="22">
    <source>
    </source>
</evidence>
<evidence type="ECO:0000269" key="23">
    <source>
    </source>
</evidence>
<evidence type="ECO:0000269" key="24">
    <source>
    </source>
</evidence>
<evidence type="ECO:0000269" key="25">
    <source>
    </source>
</evidence>
<evidence type="ECO:0000269" key="26">
    <source>
    </source>
</evidence>
<evidence type="ECO:0000269" key="27">
    <source>
    </source>
</evidence>
<evidence type="ECO:0000269" key="28">
    <source>
    </source>
</evidence>
<evidence type="ECO:0000269" key="29">
    <source>
    </source>
</evidence>
<evidence type="ECO:0000269" key="30">
    <source>
    </source>
</evidence>
<evidence type="ECO:0000269" key="31">
    <source>
    </source>
</evidence>
<evidence type="ECO:0000303" key="32">
    <source>
    </source>
</evidence>
<evidence type="ECO:0000303" key="33">
    <source>
    </source>
</evidence>
<evidence type="ECO:0000303" key="34">
    <source>
    </source>
</evidence>
<evidence type="ECO:0000303" key="35">
    <source>
    </source>
</evidence>
<evidence type="ECO:0000303" key="36">
    <source>
    </source>
</evidence>
<evidence type="ECO:0000303" key="37">
    <source>
    </source>
</evidence>
<evidence type="ECO:0000303" key="38">
    <source>
    </source>
</evidence>
<evidence type="ECO:0000305" key="39"/>
<evidence type="ECO:0007829" key="40">
    <source>
        <dbReference type="PDB" id="2RMN"/>
    </source>
</evidence>
<evidence type="ECO:0007829" key="41">
    <source>
        <dbReference type="PDB" id="2Y9T"/>
    </source>
</evidence>
<evidence type="ECO:0007829" key="42">
    <source>
        <dbReference type="PDB" id="2Y9U"/>
    </source>
</evidence>
<evidence type="ECO:0007829" key="43">
    <source>
        <dbReference type="PDB" id="3QYM"/>
    </source>
</evidence>
<evidence type="ECO:0007829" key="44">
    <source>
        <dbReference type="PDB" id="3ZY0"/>
    </source>
</evidence>
<evidence type="ECO:0007829" key="45">
    <source>
        <dbReference type="PDB" id="4A9Z"/>
    </source>
</evidence>
<evidence type="ECO:0007829" key="46">
    <source>
        <dbReference type="PDB" id="6FGN"/>
    </source>
</evidence>
<evidence type="ECO:0007829" key="47">
    <source>
        <dbReference type="PDB" id="6RU8"/>
    </source>
</evidence>
<evidence type="ECO:0007829" key="48">
    <source>
        <dbReference type="PDB" id="7Z71"/>
    </source>
</evidence>
<evidence type="ECO:0007829" key="49">
    <source>
        <dbReference type="PDB" id="7Z7E"/>
    </source>
</evidence>
<evidence type="ECO:0007829" key="50">
    <source>
        <dbReference type="PDB" id="8P9C"/>
    </source>
</evidence>
<feature type="chain" id="PRO_0000185729" description="Tumor protein 63">
    <location>
        <begin position="1"/>
        <end position="680"/>
    </location>
</feature>
<feature type="domain" description="SAM">
    <location>
        <begin position="541"/>
        <end position="607"/>
    </location>
</feature>
<feature type="DNA-binding region">
    <location>
        <begin position="170"/>
        <end position="362"/>
    </location>
</feature>
<feature type="region of interest" description="Transcription activation">
    <location>
        <begin position="1"/>
        <end position="107"/>
    </location>
</feature>
<feature type="region of interest" description="Disordered" evidence="2">
    <location>
        <begin position="123"/>
        <end position="171"/>
    </location>
</feature>
<feature type="region of interest" description="Disordered" evidence="2">
    <location>
        <begin position="351"/>
        <end position="393"/>
    </location>
</feature>
<feature type="region of interest" description="Interaction with HIPK2" evidence="11">
    <location>
        <begin position="352"/>
        <end position="388"/>
    </location>
</feature>
<feature type="region of interest" description="Oligomerization">
    <location>
        <begin position="394"/>
        <end position="443"/>
    </location>
</feature>
<feature type="region of interest" description="Disordered" evidence="2">
    <location>
        <begin position="435"/>
        <end position="472"/>
    </location>
</feature>
<feature type="region of interest" description="Transactivation inhibition">
    <location>
        <begin position="610"/>
        <end position="680"/>
    </location>
</feature>
<feature type="compositionally biased region" description="Polar residues" evidence="2">
    <location>
        <begin position="123"/>
        <end position="157"/>
    </location>
</feature>
<feature type="compositionally biased region" description="Basic and acidic residues" evidence="2">
    <location>
        <begin position="351"/>
        <end position="360"/>
    </location>
</feature>
<feature type="compositionally biased region" description="Polar residues" evidence="2">
    <location>
        <begin position="361"/>
        <end position="371"/>
    </location>
</feature>
<feature type="compositionally biased region" description="Polar residues" evidence="2">
    <location>
        <begin position="379"/>
        <end position="389"/>
    </location>
</feature>
<feature type="compositionally biased region" description="Low complexity" evidence="2">
    <location>
        <begin position="437"/>
        <end position="450"/>
    </location>
</feature>
<feature type="compositionally biased region" description="Polar residues" evidence="2">
    <location>
        <begin position="451"/>
        <end position="472"/>
    </location>
</feature>
<feature type="binding site" evidence="1">
    <location>
        <position position="244"/>
    </location>
    <ligand>
        <name>Zn(2+)</name>
        <dbReference type="ChEBI" id="CHEBI:29105"/>
    </ligand>
</feature>
<feature type="binding site" evidence="1">
    <location>
        <position position="247"/>
    </location>
    <ligand>
        <name>Zn(2+)</name>
        <dbReference type="ChEBI" id="CHEBI:29105"/>
    </ligand>
</feature>
<feature type="binding site" evidence="1">
    <location>
        <position position="308"/>
    </location>
    <ligand>
        <name>Zn(2+)</name>
        <dbReference type="ChEBI" id="CHEBI:29105"/>
    </ligand>
</feature>
<feature type="binding site" evidence="1">
    <location>
        <position position="312"/>
    </location>
    <ligand>
        <name>Zn(2+)</name>
        <dbReference type="ChEBI" id="CHEBI:29105"/>
    </ligand>
</feature>
<feature type="cross-link" description="Glycyl lysine isopeptide (Lys-Gly) (interchain with G-Cter in SUMO)" evidence="1">
    <location>
        <position position="676"/>
    </location>
</feature>
<feature type="splice variant" id="VSP_012465" description="In isoform 2, isoform 4, isoform 6, isoform 8, isoform 10 and isoform 12." evidence="32 34 37 38">
    <original>MNFETSRCATLQYCPDPYIQRFVETPAHFSWKESYYRSTMSQSTQTNEFLSPEVFQHIWDFLEQPICSVQPIDLNFVDEPSEDGATNKIEISMDCIRMQDSDLSDPMW</original>
    <variation>MLYLENNAQTQFSE</variation>
    <location>
        <begin position="1"/>
        <end position="108"/>
    </location>
</feature>
<feature type="splice variant" id="VSP_012466" description="In isoform 9 and isoform 10." evidence="34">
    <location>
        <begin position="109"/>
        <end position="193"/>
    </location>
</feature>
<feature type="splice variant" id="VSP_012467" description="In isoform 11 and isoform 12." evidence="35">
    <original>GTKRP</original>
    <variation>A</variation>
    <location>
        <begin position="373"/>
        <end position="377"/>
    </location>
</feature>
<feature type="splice variant" id="VSP_012468" description="In isoform 5 and isoform 6." evidence="36 38">
    <original>QTSIQSPSSYGNSSPPLNKMNSMNKLPSVSQLINPQQRNALTPTTIPDGMGANIPMMGTHMPMAGDMNGLSPTQALPPPLSMPSTSHCTPPPPYPTDCSIVSFLARLGCSSCLDYFTTQGLTTIYQIEHYSMDDLASLKIPEQFRHAIWKGILDHRQLHEFSSPSHLLRTPSSASTVSVGSSETRGERVIDAVRFTLRQTISFPPRDEWNDFNFDMDARRNKQQRIKEEGE</original>
    <variation>HLLSACFRNELVEPRRETPKQSDVFFRHSKPPNRSVYP</variation>
    <location>
        <begin position="450"/>
        <end position="680"/>
    </location>
</feature>
<feature type="splice variant" id="VSP_012469" description="In isoform 7 and isoform 8." evidence="33">
    <original>IPMMGTHMPMAGDMNGLSPTQALPPPLSMPSTSHCTPPPPYPTDCSIVSFLARLGCSSCLDYFTTQGLTTIYQIEHYSMDDLASLKIPEQFRHAIWKGILDHRQLHEFSSPSHLLRTPSSASTVSVGSSETRGERVIDAVRFTLRQTISFPPRDEWNDFNFDMDARRNKQQRIKEEGE</original>
    <variation>RSGKSENP</variation>
    <location>
        <begin position="503"/>
        <end position="680"/>
    </location>
</feature>
<feature type="splice variant" id="VSP_012470" description="In isoform 3 and isoform 4." evidence="38">
    <original>SFLARLGCSSCLDYFTTQGLTTIYQIEHYSMDDLASLKIPEQFRHAIWKGILDHRQLHEFSSPSHLLRTPSSASTVSVGSSETRGERVIDAVRFTLRQTISFPPRDEWNDFNFDMDARRNKQQRIKEEGE</original>
    <variation>RIWQV</variation>
    <location>
        <begin position="551"/>
        <end position="680"/>
    </location>
</feature>
<feature type="sequence variant" id="VAR_088375" description="In POF21; uncertain significance; no effect on transcriptional activation in a luciferase reporter assay; does not affect oligomerization." evidence="27">
    <original>Y</original>
    <variation>C</variation>
    <location>
        <position position="18"/>
    </location>
</feature>
<feature type="sequence variant" id="VAR_088376" description="In POF21; uncertain significance; results in increased transcriptional activation in a luciferase reporter assay; affects oligomerization." evidence="27">
    <original>R</original>
    <variation>P</variation>
    <location>
        <position position="97"/>
    </location>
</feature>
<feature type="sequence variant" id="VAR_035126" description="In dbSNP:rs193287780." evidence="20">
    <original>S</original>
    <variation>L</variation>
    <location>
        <position position="129"/>
    </location>
</feature>
<feature type="sequence variant" id="VAR_020866" description="In head/neck cancer." evidence="30">
    <original>S</original>
    <variation>L</variation>
    <location>
        <position position="184"/>
    </location>
</feature>
<feature type="sequence variant" id="VAR_020867" description="In lung carcinoma; somatic mutation." evidence="30">
    <original>A</original>
    <variation>P</variation>
    <location>
        <position position="187"/>
    </location>
</feature>
<feature type="sequence variant" id="VAR_032736" description="In SHFM4." evidence="9">
    <original>T</original>
    <variation>TP</variation>
    <location>
        <position position="193"/>
    </location>
</feature>
<feature type="sequence variant" id="VAR_020868" description="In cervical cancer." evidence="30">
    <original>Q</original>
    <variation>L</variation>
    <location>
        <position position="204"/>
    </location>
</feature>
<feature type="sequence variant" id="VAR_032737" description="In SHFM4; dbSNP:rs1560274243." evidence="9">
    <original>K</original>
    <variation>E</variation>
    <location>
        <position position="232"/>
    </location>
</feature>
<feature type="sequence variant" id="VAR_020869" description="In SHFM4; dbSNP:rs121908838." evidence="6">
    <original>K</original>
    <variation>E</variation>
    <location>
        <position position="233"/>
    </location>
</feature>
<feature type="sequence variant" id="VAR_020870" description="In EEC3; dbSNP:rs121908836." evidence="5 9">
    <original>R</original>
    <variation>Q</variation>
    <location>
        <position position="243"/>
    </location>
</feature>
<feature type="sequence variant" id="VAR_020871" description="In EEC3; dbSNP:rs121908835." evidence="5 9">
    <original>R</original>
    <variation>W</variation>
    <location>
        <position position="243"/>
    </location>
</feature>
<feature type="sequence variant" id="VAR_032738" description="In EEC3; dbSNP:rs121908849." evidence="9">
    <original>R</original>
    <variation>Q</variation>
    <location>
        <position position="266"/>
    </location>
</feature>
<feature type="sequence variant" id="VAR_020872" description="In colon cancer." evidence="4">
    <original>P</original>
    <variation>H</variation>
    <location>
        <position position="279"/>
    </location>
</feature>
<feature type="sequence variant" id="VAR_088377" description="In POF21; uncertain significance; no effect on transcriptional activation in a luciferase reporter assay; does not affect oligomerization; dbSNP:rs754624330." evidence="28">
    <original>S</original>
    <variation>N</variation>
    <location>
        <position position="285"/>
    </location>
</feature>
<feature type="sequence variant" id="VAR_032739" description="In EEC3; dbSNP:rs1717925063." evidence="9">
    <original>C</original>
    <variation>Y</variation>
    <location>
        <position position="308"/>
    </location>
</feature>
<feature type="sequence variant" id="VAR_032740" description="In EEC3." evidence="9">
    <original>S</original>
    <variation>N</variation>
    <location>
        <position position="311"/>
    </location>
</feature>
<feature type="sequence variant" id="VAR_032741" description="In EEC3; dbSNP:rs1205536026." evidence="9">
    <original>R</original>
    <variation>C</variation>
    <location>
        <position position="318"/>
    </location>
</feature>
<feature type="sequence variant" id="VAR_020873" description="In EEC3 and RHS; does not decrease the transcriptional activity of the isoform 5 on a TP53 reporter system but disrupts the dominant-negative activity of isoform 2 and isoform 5 on the transcriptional activity of TP53; dbSNP:rs121908840." evidence="6 9 18">
    <original>R</original>
    <variation>H</variation>
    <location>
        <position position="318"/>
    </location>
</feature>
<feature type="sequence variant" id="VAR_032742" description="In EEC3." evidence="9">
    <original>R</original>
    <variation>Q</variation>
    <location>
        <position position="318"/>
    </location>
</feature>
<feature type="sequence variant" id="VAR_020874" description="In EEC3; dbSNP:rs121908839." evidence="6 9">
    <original>R</original>
    <variation>C</variation>
    <location>
        <position position="319"/>
    </location>
</feature>
<feature type="sequence variant" id="VAR_032743" description="In EEC3 and SHFM4; dbSNP:rs886039442." evidence="9">
    <original>R</original>
    <variation>H</variation>
    <location>
        <position position="319"/>
    </location>
</feature>
<feature type="sequence variant" id="VAR_032744" description="In EEC3." evidence="9">
    <original>R</original>
    <variation>S</variation>
    <location>
        <position position="319"/>
    </location>
</feature>
<feature type="sequence variant" id="VAR_020875" description="In ADULT syndrome; confers novel transcription activation capacity on isoform 6; dbSNP:rs113993967." evidence="12">
    <original>R</original>
    <variation>Q</variation>
    <location>
        <position position="337"/>
    </location>
</feature>
<feature type="sequence variant" id="VAR_020876" description="In EEC3; dbSNP:rs121908841." evidence="6 9">
    <original>R</original>
    <variation>Q</variation>
    <location>
        <position position="343"/>
    </location>
</feature>
<feature type="sequence variant" id="VAR_032745" description="In EEC3; dbSNP:rs886041251." evidence="9">
    <original>R</original>
    <variation>W</variation>
    <location>
        <position position="343"/>
    </location>
</feature>
<feature type="sequence variant" id="VAR_020877" description="In EEC3; abolishes transcription activation; dbSNP:rs121908837." evidence="5 9">
    <original>C</original>
    <variation>R</variation>
    <location>
        <position position="345"/>
    </location>
</feature>
<feature type="sequence variant" id="VAR_032746" description="In EEC3; dbSNP:rs1064793282." evidence="9">
    <original>C</original>
    <variation>S</variation>
    <location>
        <position position="347"/>
    </location>
</feature>
<feature type="sequence variant" id="VAR_032747" description="In EEC3; dbSNP:rs1577147850." evidence="9">
    <original>P</original>
    <variation>S</variation>
    <location>
        <position position="348"/>
    </location>
</feature>
<feature type="sequence variant" id="VAR_020878" description="In EEC3; dbSNP:rs121908844." evidence="17">
    <original>D</original>
    <variation>G</variation>
    <location>
        <position position="351"/>
    </location>
</feature>
<feature type="sequence variant" id="VAR_032748" description="In EEC3; dbSNP:rs2108806492." evidence="9">
    <original>D</original>
    <variation>H</variation>
    <location>
        <position position="351"/>
    </location>
</feature>
<feature type="sequence variant" id="VAR_035127" description="In OFC8; dbSNP:rs121908847." evidence="20">
    <original>R</original>
    <variation>G</variation>
    <location>
        <position position="352"/>
    </location>
</feature>
<feature type="sequence variant" id="VAR_088378" description="In POF21; uncertain significance; no effect on transcriptional activation in a luciferase reporter assay; does not affect oligomerization; dbSNP:rs565094952." evidence="28">
    <original>T</original>
    <variation>A</variation>
    <location>
        <position position="538"/>
    </location>
</feature>
<feature type="sequence variant" id="VAR_035128" description="In RHS; dbSNP:rs121908845." evidence="19">
    <original>I</original>
    <variation>T</variation>
    <location>
        <position position="549"/>
    </location>
</feature>
<feature type="sequence variant" id="VAR_020879" description="In AEC; dbSNP:rs121908842." evidence="7">
    <original>L</original>
    <variation>F</variation>
    <location>
        <position position="553"/>
    </location>
</feature>
<feature type="sequence variant" id="VAR_020880" description="In ovarian cancer." evidence="4">
    <original>S</original>
    <variation>A</variation>
    <location>
        <position position="560"/>
    </location>
</feature>
<feature type="sequence variant" id="VAR_020881" description="In AEC; dbSNP:rs121908843." evidence="7">
    <original>C</original>
    <variation>G</variation>
    <location>
        <position position="561"/>
    </location>
</feature>
<feature type="sequence variant" id="VAR_088379" description="In POF21; uncertain significance; no effect on transcriptional activation in a luciferase reporter assay; does not affect oligomerization; dbSNP:rs1041183255." evidence="28">
    <original>T</original>
    <variation>I</variation>
    <location>
        <position position="567"/>
    </location>
</feature>
<feature type="sequence variant" id="VAR_035129" description="In RHS; dbSNP:rs121908846." evidence="16">
    <original>S</original>
    <variation>P</variation>
    <location>
        <position position="580"/>
    </location>
</feature>
<feature type="sequence variant" id="VAR_088380" description="In POF21; results in increased transcriptional activation in luciferase reporter assays; affects oligomerization." evidence="25 28">
    <location>
        <begin position="594"/>
        <end position="680"/>
    </location>
</feature>
<feature type="sequence variant" id="VAR_088381" description="In POF21." evidence="25">
    <location>
        <begin position="598"/>
        <end position="680"/>
    </location>
</feature>
<feature type="sequence variant" id="VAR_035130" description="In dbSNP:rs767906723." evidence="20">
    <original>D</original>
    <variation>H</variation>
    <location>
        <position position="603"/>
    </location>
</feature>
<feature type="sequence variant" id="VAR_088382" description="In LMS." evidence="26">
    <location>
        <begin position="643"/>
        <end position="680"/>
    </location>
</feature>
<feature type="sequence variant" id="VAR_088383" description="In POF21; results in increased transcriptional activation in luciferase reporter assays; affects oligomerization; dbSNP:rs2108874267." evidence="28">
    <original>R</original>
    <variation>Q</variation>
    <location>
        <position position="643"/>
    </location>
</feature>
<feature type="sequence variant" id="VAR_088384" description="In POF21; results in increased transcriptional activation in luciferase reporter assays; affects oligomerization; dbSNP:rs2108874342." evidence="28">
    <original>L</original>
    <variation>P</variation>
    <location>
        <position position="646"/>
    </location>
</feature>
<feature type="sequence variant" id="VAR_088385" description="In POF21; results in increased transcriptional activation in luciferase reporter assays; affects oligomerization; when expressed in mice, it results in accelerated oocyte loss via apoptosis; dbSNP:rs1051829008." evidence="27 28">
    <original>R</original>
    <variation>C</variation>
    <location>
        <position position="647"/>
    </location>
</feature>
<feature type="sequence variant" id="VAR_088386" description="In POF21; results in increased transcriptional activation in luciferase reporter assays; dbSNP:rs764601563." evidence="28">
    <original>R</original>
    <variation>Q</variation>
    <location>
        <position position="655"/>
    </location>
</feature>
<feature type="mutagenesis site" description="No effect on transcriptional activation in a luciferase reporter assay." evidence="27">
    <original>Y</original>
    <variation>A</variation>
    <location>
        <position position="18"/>
    </location>
</feature>
<feature type="mutagenesis site" description="Abrogates transcriptional activity and interaction with transactivation inhibition domain; when associated with A-59 and A-62." evidence="14">
    <original>F</original>
    <variation>A</variation>
    <location>
        <position position="55"/>
    </location>
</feature>
<feature type="mutagenesis site" description="Abrogates transcriptional activity and interaction with transactivation inhibition domain; when associated with A-55 and A-62." evidence="14">
    <original>W</original>
    <variation>A</variation>
    <location>
        <position position="59"/>
    </location>
</feature>
<feature type="mutagenesis site" description="Abrogates transcriptional activity and interaction with transactivation inhibition domain; when associated with A-55 and A-59." evidence="14">
    <original>L</original>
    <variation>A</variation>
    <location>
        <position position="62"/>
    </location>
</feature>
<feature type="mutagenesis site" description="No effect on transcriptional activation in a luciferase reporter assay." evidence="27">
    <original>R</original>
    <variation>C</variation>
    <location>
        <position position="97"/>
    </location>
</feature>
<feature type="mutagenesis site" description="Abolishes ubiquitination." evidence="22">
    <original>Y</original>
    <variation>F</variation>
    <location>
        <position position="543"/>
    </location>
</feature>
<feature type="mutagenesis site" description="Increased transcriptional activation in a luciferase reporter assay." evidence="27">
    <original>R</original>
    <variation>A</variation>
    <location>
        <position position="643"/>
    </location>
</feature>
<feature type="mutagenesis site" description="Increased transcriptional activation in a luciferase reporter assay." evidence="27">
    <original>R</original>
    <variation>A</variation>
    <location>
        <position position="647"/>
    </location>
</feature>
<feature type="sequence conflict" description="In Ref. 1; BAA32433." evidence="39" ref="1">
    <original>Q</original>
    <variation>R</variation>
    <location>
        <position position="125"/>
    </location>
</feature>
<feature type="sequence conflict" description="In Ref. 1; BAA32433." evidence="39" ref="1">
    <original>S</original>
    <variation>P</variation>
    <location>
        <position position="154"/>
    </location>
</feature>
<feature type="sequence conflict" description="In Ref. 1; BAA32433." evidence="39" ref="1">
    <original>F</original>
    <variation>S</variation>
    <location>
        <position position="177"/>
    </location>
</feature>
<feature type="sequence conflict" description="In Ref. 10; AAC24830." evidence="39" ref="10">
    <original>F</original>
    <variation>S</variation>
    <location>
        <position position="378"/>
    </location>
</feature>
<feature type="sequence conflict" description="In Ref. 2; CAA76562." evidence="39" ref="2">
    <original>H</original>
    <variation>Q</variation>
    <location>
        <position position="536"/>
    </location>
</feature>
<feature type="sequence conflict" description="In Ref. 4; BAA32593 and 7; AAF43487/AAF43491." evidence="39" ref="4 7">
    <original>S</original>
    <variation>G</variation>
    <location>
        <position position="551"/>
    </location>
</feature>
<feature type="helix" evidence="46">
    <location>
        <begin position="54"/>
        <end position="63"/>
    </location>
</feature>
<feature type="strand" evidence="40">
    <location>
        <begin position="156"/>
        <end position="161"/>
    </location>
</feature>
<feature type="helix" evidence="49">
    <location>
        <begin position="173"/>
        <end position="175"/>
    </location>
</feature>
<feature type="strand" evidence="49">
    <location>
        <begin position="178"/>
        <end position="180"/>
    </location>
</feature>
<feature type="strand" evidence="48">
    <location>
        <begin position="186"/>
        <end position="189"/>
    </location>
</feature>
<feature type="strand" evidence="49">
    <location>
        <begin position="193"/>
        <end position="195"/>
    </location>
</feature>
<feature type="turn" evidence="49">
    <location>
        <begin position="196"/>
        <end position="199"/>
    </location>
</feature>
<feature type="strand" evidence="49">
    <location>
        <begin position="200"/>
        <end position="203"/>
    </location>
</feature>
<feature type="strand" evidence="49">
    <location>
        <begin position="209"/>
        <end position="214"/>
    </location>
</feature>
<feature type="strand" evidence="49">
    <location>
        <begin position="224"/>
        <end position="233"/>
    </location>
</feature>
<feature type="helix" evidence="49">
    <location>
        <begin position="234"/>
        <end position="236"/>
    </location>
</feature>
<feature type="helix" evidence="49">
    <location>
        <begin position="245"/>
        <end position="249"/>
    </location>
</feature>
<feature type="turn" evidence="49">
    <location>
        <begin position="252"/>
        <end position="256"/>
    </location>
</feature>
<feature type="strand" evidence="49">
    <location>
        <begin position="264"/>
        <end position="269"/>
    </location>
</feature>
<feature type="strand" evidence="49">
    <location>
        <begin position="274"/>
        <end position="277"/>
    </location>
</feature>
<feature type="turn" evidence="49">
    <location>
        <begin position="279"/>
        <end position="281"/>
    </location>
</feature>
<feature type="strand" evidence="49">
    <location>
        <begin position="284"/>
        <end position="289"/>
    </location>
</feature>
<feature type="strand" evidence="49">
    <location>
        <begin position="294"/>
        <end position="296"/>
    </location>
</feature>
<feature type="strand" evidence="49">
    <location>
        <begin position="300"/>
        <end position="306"/>
    </location>
</feature>
<feature type="turn" evidence="49">
    <location>
        <begin position="313"/>
        <end position="318"/>
    </location>
</feature>
<feature type="strand" evidence="49">
    <location>
        <begin position="321"/>
        <end position="328"/>
    </location>
</feature>
<feature type="strand" evidence="43">
    <location>
        <begin position="330"/>
        <end position="332"/>
    </location>
</feature>
<feature type="strand" evidence="49">
    <location>
        <begin position="334"/>
        <end position="344"/>
    </location>
</feature>
<feature type="helix" evidence="49">
    <location>
        <begin position="348"/>
        <end position="357"/>
    </location>
</feature>
<feature type="strand" evidence="40">
    <location>
        <begin position="369"/>
        <end position="372"/>
    </location>
</feature>
<feature type="strand" evidence="44">
    <location>
        <begin position="401"/>
        <end position="407"/>
    </location>
</feature>
<feature type="helix" evidence="50">
    <location>
        <begin position="408"/>
        <end position="423"/>
    </location>
</feature>
<feature type="helix" evidence="50">
    <location>
        <begin position="424"/>
        <end position="426"/>
    </location>
</feature>
<feature type="helix" evidence="50">
    <location>
        <begin position="429"/>
        <end position="443"/>
    </location>
</feature>
<feature type="helix" evidence="45">
    <location>
        <begin position="444"/>
        <end position="449"/>
    </location>
</feature>
<feature type="strand" evidence="41">
    <location>
        <begin position="546"/>
        <end position="548"/>
    </location>
</feature>
<feature type="helix" evidence="42">
    <location>
        <begin position="549"/>
        <end position="554"/>
    </location>
</feature>
<feature type="turn" evidence="42">
    <location>
        <begin position="555"/>
        <end position="557"/>
    </location>
</feature>
<feature type="helix" evidence="42">
    <location>
        <begin position="559"/>
        <end position="561"/>
    </location>
</feature>
<feature type="helix" evidence="42">
    <location>
        <begin position="562"/>
        <end position="566"/>
    </location>
</feature>
<feature type="turn" evidence="42">
    <location>
        <begin position="567"/>
        <end position="569"/>
    </location>
</feature>
<feature type="helix" evidence="42">
    <location>
        <begin position="573"/>
        <end position="576"/>
    </location>
</feature>
<feature type="helix" evidence="42">
    <location>
        <begin position="581"/>
        <end position="586"/>
    </location>
</feature>
<feature type="helix" evidence="42">
    <location>
        <begin position="591"/>
        <end position="609"/>
    </location>
</feature>
<feature type="strand" evidence="41">
    <location>
        <begin position="613"/>
        <end position="615"/>
    </location>
</feature>
<feature type="helix" evidence="47">
    <location>
        <begin position="622"/>
        <end position="625"/>
    </location>
</feature>
<feature type="sequence variant" id="VAR_082924" description="In ADULT syndrome; dbSNP:rs113993963." evidence="39">
    <original>N</original>
    <variation>H</variation>
    <location sequence="Q9H3D4-2">
        <position position="6"/>
    </location>
</feature>
<feature type="sequence variant" id="VAR_082925" description="In ADULT syndrome; dbSNP:rs113993963." evidence="39">
    <original>N</original>
    <variation>H</variation>
    <location sequence="Q9H3D4-4">
        <position position="6"/>
    </location>
</feature>
<feature type="sequence variant" id="VAR_082926" description="In ADULT syndrome; dbSNP:rs113993963." evidence="39">
    <original>N</original>
    <variation>H</variation>
    <location sequence="Q9H3D4-6">
        <position position="6"/>
    </location>
</feature>
<feature type="sequence variant" id="VAR_082927" description="In ADULT syndrome; dbSNP:rs113993963." evidence="39">
    <original>N</original>
    <variation>H</variation>
    <location sequence="Q9H3D4-8">
        <position position="6"/>
    </location>
</feature>
<feature type="sequence variant" id="VAR_082928" description="In ADULT syndrome; dbSNP:rs113993963." evidence="39">
    <original>N</original>
    <variation>H</variation>
    <location sequence="Q9H3D4-10">
        <position position="6"/>
    </location>
</feature>
<feature type="sequence variant" id="VAR_082929" description="In ADULT syndrome; dbSNP:rs113993963." evidence="39">
    <original>N</original>
    <variation>H</variation>
    <location sequence="Q9H3D4-12">
        <position position="6"/>
    </location>
</feature>
<name>P63_HUMAN</name>
<sequence length="680" mass="76785">MNFETSRCATLQYCPDPYIQRFVETPAHFSWKESYYRSTMSQSTQTNEFLSPEVFQHIWDFLEQPICSVQPIDLNFVDEPSEDGATNKIEISMDCIRMQDSDLSDPMWPQYTNLGLLNSMDQQIQNGSSSTSPYNTDHAQNSVTAPSPYAQPSSTFDALSPSPAIPSNTDYPGPHSFDVSFQQSSTAKSATWTYSTELKKLYCQIAKTCPIQIKVMTPPPQGAVIRAMPVYKKAEHVTEVVKRCPNHELSREFNEGQIAPPSHLIRVEGNSHAQYVEDPITGRQSVLVPYEPPQVGTEFTTVLYNFMCNSSCVGGMNRRPILIIVTLETRDGQVLGRRCFEARICACPGRDRKADEDSIRKQQVSDSTKNGDGTKRPFRQNTHGIQMTSIKKRRSPDDELLYLPVRGRETYEMLLKIKESLELMQYLPQHTIETYRQQQQQQHQHLLQKQTSIQSPSSYGNSSPPLNKMNSMNKLPSVSQLINPQQRNALTPTTIPDGMGANIPMMGTHMPMAGDMNGLSPTQALPPPLSMPSTSHCTPPPPYPTDCSIVSFLARLGCSSCLDYFTTQGLTTIYQIEHYSMDDLASLKIPEQFRHAIWKGILDHRQLHEFSSPSHLLRTPSSASTVSVGSSETRGERVIDAVRFTLRQTISFPPRDEWNDFNFDMDARRNKQQRIKEEGE</sequence>
<keyword id="KW-0002">3D-structure</keyword>
<keyword id="KW-0010">Activator</keyword>
<keyword id="KW-0877">Alternative promoter usage</keyword>
<keyword id="KW-0025">Alternative splicing</keyword>
<keyword id="KW-0053">Apoptosis</keyword>
<keyword id="KW-0217">Developmental protein</keyword>
<keyword id="KW-0225">Disease variant</keyword>
<keyword id="KW-0238">DNA-binding</keyword>
<keyword id="KW-0038">Ectodermal dysplasia</keyword>
<keyword id="KW-1017">Isopeptide bond</keyword>
<keyword id="KW-0479">Metal-binding</keyword>
<keyword id="KW-0914">Notch signaling pathway</keyword>
<keyword id="KW-0539">Nucleus</keyword>
<keyword id="KW-1066">Premature ovarian failure</keyword>
<keyword id="KW-1267">Proteomics identification</keyword>
<keyword id="KW-1185">Reference proteome</keyword>
<keyword id="KW-0804">Transcription</keyword>
<keyword id="KW-0805">Transcription regulation</keyword>
<keyword id="KW-0832">Ubl conjugation</keyword>
<keyword id="KW-0862">Zinc</keyword>
<reference key="1">
    <citation type="journal article" date="1998" name="Biochem. Biophys. Res. Commun.">
        <title>A second p53-related protein, p73L, with high homology to p73.</title>
        <authorList>
            <person name="Senoo M."/>
            <person name="Seki N."/>
            <person name="Ohira M."/>
            <person name="Sugano S."/>
            <person name="Watanabe M."/>
            <person name="Tachibana M."/>
            <person name="Tanaka T."/>
            <person name="Shinkai Y."/>
            <person name="Kato H."/>
        </authorList>
    </citation>
    <scope>NUCLEOTIDE SEQUENCE [MRNA] (ISOFORM 2)</scope>
</reference>
<reference key="2">
    <citation type="journal article" date="1998" name="Mamm. Genome">
        <title>Cloning and chromosomal mapping of the human p53-related KET gene to chromosome 3q27 and its murine homolog Ket to mouse chromosome 16.</title>
        <authorList>
            <person name="Augustin M."/>
            <person name="Bamberger C."/>
            <person name="Paul D."/>
            <person name="Schmale H."/>
        </authorList>
    </citation>
    <scope>NUCLEOTIDE SEQUENCE [MRNA] (ISOFORM 1)</scope>
    <source>
        <tissue>Keratinocyte</tissue>
        <tissue>Skeletal muscle</tissue>
    </source>
</reference>
<reference key="3">
    <citation type="journal article" date="1998" name="Mol. Cell">
        <title>p63, a p53 homolog at 3q27-29, encodes multiple products with transactivating, death-inducing, and dominant-negative activities.</title>
        <authorList>
            <person name="Yang A."/>
            <person name="Kaghad M."/>
            <person name="Wang Y."/>
            <person name="Gillett E."/>
            <person name="Fleming M.D."/>
            <person name="Doetsch V."/>
            <person name="Andrews N.C."/>
            <person name="Caput D."/>
            <person name="McKeon F."/>
        </authorList>
    </citation>
    <scope>NUCLEOTIDE SEQUENCE [MRNA] (ISOFORMS 2; 4 AND 6)</scope>
    <scope>NUCLEOTIDE SEQUENCE [GENOMIC DNA] OF 32-680 (ISOFORMS 1; 3 AND 5)</scope>
    <scope>FUNCTION</scope>
    <scope>TISSUE SPECIFICITY</scope>
</reference>
<reference key="4">
    <citation type="journal article" date="1998" name="Nat. Med.">
        <title>Cloning and functional analysis of human p51, which structurally and functionally resembles p53.</title>
        <authorList>
            <person name="Osada M."/>
            <person name="Ohba M."/>
            <person name="Kawahara C."/>
            <person name="Ishioka C."/>
            <person name="Kanamaru R."/>
            <person name="Katoh I."/>
            <person name="Ikawa Y."/>
            <person name="Nimura Y."/>
            <person name="Nakagawara A."/>
            <person name="Obinata M."/>
            <person name="Ikawa S."/>
        </authorList>
    </citation>
    <scope>NUCLEOTIDE SEQUENCE [MRNA] (ISOFORMS 1 AND 5)</scope>
    <scope>VARIANT HEAD/NECK CANCER LEU-184</scope>
    <scope>VARIANT LUNG CARCINOMA PRO-187</scope>
    <scope>VARIANT CERVICAL CANCER LEU-204</scope>
    <source>
        <tissue>Skeletal muscle</tissue>
    </source>
</reference>
<reference key="5">
    <citation type="journal article" date="1999" name="Cancer Res.">
        <title>Mutational analysis of the p63/p73L/p51/p40/CUSP/KET gene in human cancer cell lines using intronic primers.</title>
        <authorList>
            <person name="Hagiwara K."/>
            <person name="McMenamin M.G."/>
            <person name="Miura K."/>
            <person name="Harris C.C."/>
        </authorList>
    </citation>
    <scope>NUCLEOTIDE SEQUENCE [GENOMIC DNA]</scope>
    <scope>VARIANT COLON CANCER HIS-279</scope>
    <scope>VARIANT OVARIAN CANCER ALA-560</scope>
</reference>
<reference key="6">
    <citation type="journal article" date="1999" name="J. Invest. Dermatol.">
        <title>Characterization of an autoantigen associated with chronic ulcerative stomatitis: the CUSP autoantigen is a member of the p53 family.</title>
        <authorList>
            <person name="Lee L.A."/>
            <person name="Walsh P."/>
            <person name="Prater C.A."/>
            <person name="Su L.-J."/>
            <person name="Marchbank A."/>
            <person name="Egbert T.B."/>
            <person name="Dellavalle R.P."/>
            <person name="Targoff I.N."/>
            <person name="Kaufman K.M."/>
            <person name="Chorzelski T.P."/>
            <person name="Jablonska S."/>
        </authorList>
    </citation>
    <scope>NUCLEOTIDE SEQUENCE [MRNA] (ISOFORM 2)</scope>
</reference>
<reference key="7">
    <citation type="journal article" date="1999" name="Neoplasia">
        <title>Mutation and expression of the p51 gene in human lung cancer.</title>
        <authorList>
            <person name="Tani M."/>
            <person name="Shimizu K."/>
            <person name="Kawahara C."/>
            <person name="Kohno T."/>
            <person name="Ishimoto O."/>
            <person name="Ikawa S."/>
            <person name="Yokota J."/>
        </authorList>
    </citation>
    <scope>NUCLEOTIDE SEQUENCE [GENOMIC DNA / MRNA] (ISOFORM 7)</scope>
    <scope>ALTERNATIVE SPLICING (ISOFORM 8)</scope>
</reference>
<reference key="8">
    <citation type="journal article" date="2001" name="Br. J. Cancer">
        <title>Transcriptional dysregulation of the p73L/p63/p51/p40/KET gene in human squamous cell carcinomas: expression of Delta Np73L, a novel dominant-negative isoform, and loss of expression of the potential tumour suppressor p51.</title>
        <authorList>
            <person name="Senoo M."/>
            <person name="Tsuchiya I."/>
            <person name="Matsumura Y."/>
            <person name="Mori T."/>
            <person name="Saito Y."/>
            <person name="Kato H."/>
            <person name="Okamoto T."/>
            <person name="Habu S."/>
        </authorList>
    </citation>
    <scope>NUCLEOTIDE SEQUENCE [MRNA] (ISOFORM 10)</scope>
    <scope>TISSUE SPECIFICITY (ISOFORM 10)</scope>
</reference>
<reference key="9">
    <citation type="journal article" date="2004" name="Genome Res.">
        <title>The status, quality, and expansion of the NIH full-length cDNA project: the Mammalian Gene Collection (MGC).</title>
        <authorList>
            <consortium name="The MGC Project Team"/>
        </authorList>
    </citation>
    <scope>NUCLEOTIDE SEQUENCE [LARGE SCALE MRNA] (ISOFORM 1)</scope>
    <source>
        <tissue>Lymph</tissue>
    </source>
</reference>
<reference key="10">
    <citation type="journal article" date="1998" name="Nat. Med.">
        <title>A new human p53 homologue.</title>
        <authorList>
            <person name="Trink B."/>
            <person name="Okami K."/>
            <person name="Wu L."/>
            <person name="Sriuranpong V."/>
            <person name="Jen J."/>
            <person name="Sidransky D."/>
        </authorList>
    </citation>
    <scope>NUCLEOTIDE SEQUENCE [MRNA] OF 1-450 (ISOFORMS 2/4/8)</scope>
    <scope>SUBUNIT</scope>
    <scope>ZINC-BINDING</scope>
    <scope>DNA-BINDING</scope>
    <source>
        <tissue>Prostate</tissue>
    </source>
</reference>
<reference key="11">
    <citation type="submission" date="2003-07" db="EMBL/GenBank/DDBJ databases">
        <title>Sequencing of candidate genes for non-syndromic cleft lip and palate.</title>
        <authorList>
            <person name="Vieira A.R."/>
            <person name="Murray J.C."/>
        </authorList>
    </citation>
    <scope>NUCLEOTIDE SEQUENCE [GENOMIC DNA] OF 1-21; 95-255; 295-330; 378-502 AND 583-680</scope>
</reference>
<reference key="12">
    <citation type="journal article" date="2001" name="J. Biol. Chem.">
        <title>High thermostability and lack of cooperative DNA binding distinguish the p63 core domain from the homologous tumor suppressor p53.</title>
        <authorList>
            <person name="Klein C."/>
            <person name="Georges G."/>
            <person name="Kunkele K.P."/>
            <person name="Huber R."/>
            <person name="Engh R.A."/>
            <person name="Hansen S."/>
        </authorList>
    </citation>
    <scope>NUCLEOTIDE SEQUENCE [MRNA] OF 153-388 (ISOFORM 11)</scope>
    <source>
        <tissue>Placenta</tissue>
    </source>
</reference>
<reference key="13">
    <citation type="journal article" date="1999" name="J. Biol. Chem.">
        <title>p73 and p63 are homotetramers capable of weak heterotypic interactions with each other but not with p53.</title>
        <authorList>
            <person name="Davison T.S."/>
            <person name="Vagner C."/>
            <person name="Kaghad M."/>
            <person name="Ayed A."/>
            <person name="Caput D."/>
            <person name="Arrowsmith C.H."/>
        </authorList>
    </citation>
    <scope>SUBUNIT</scope>
</reference>
<reference key="14">
    <citation type="journal article" date="2001" name="Proc. Natl. Acad. Sci. U.S.A.">
        <title>p63 identifies keratinocyte stem cells.</title>
        <authorList>
            <person name="Pellegrini G."/>
            <person name="Dellambra E."/>
            <person name="Golisano O."/>
            <person name="Martinelli E."/>
            <person name="Fantozzi I."/>
            <person name="Bondanza S."/>
            <person name="Ponzin D."/>
            <person name="McKeon F."/>
            <person name="De Luca M."/>
        </authorList>
    </citation>
    <scope>TISSUE SPECIFICITY</scope>
</reference>
<reference key="15">
    <citation type="journal article" date="2002" name="J. Biol. Chem.">
        <title>The p53 family member genes are involved in the Notch signal pathway.</title>
        <authorList>
            <person name="Sasaki Y."/>
            <person name="Ishida S."/>
            <person name="Morimoto I."/>
            <person name="Yamashita T."/>
            <person name="Kojima T."/>
            <person name="Kihara C."/>
            <person name="Tanaka T."/>
            <person name="Imai K."/>
            <person name="Nakamura Y."/>
            <person name="Tokino T."/>
        </authorList>
    </citation>
    <scope>FUNCTION IN NOTCH SIGNALING</scope>
</reference>
<reference key="16">
    <citation type="journal article" date="2002" name="J. Biol. Chem.">
        <title>Identification and characterization of HIPK2 interacting with p73 and modulating functions of the p53 family in vivo.</title>
        <authorList>
            <person name="Kim E.-J."/>
            <person name="Park J.-S."/>
            <person name="Um S.-J."/>
        </authorList>
    </citation>
    <scope>INTERACTION WITH HIPK2</scope>
</reference>
<reference key="17">
    <citation type="journal article" date="2002" name="Mol. Cell. Biol.">
        <title>A C-terminal inhibitory domain controls the activity of p63 by an intramolecular mechanism.</title>
        <authorList>
            <person name="Serber Z."/>
            <person name="Lai H.C."/>
            <person name="Yang A."/>
            <person name="Ou H.D."/>
            <person name="Sigal M.S."/>
            <person name="Kelly A.E."/>
            <person name="Darimont B.D."/>
            <person name="Duijf P.H.G."/>
            <person name="Van Bokhoven H."/>
            <person name="McKeon F."/>
            <person name="Doetsch V."/>
        </authorList>
    </citation>
    <scope>FUNCTION</scope>
    <scope>DOMAIN</scope>
    <scope>SUBCELLULAR LOCATION</scope>
    <scope>MUTAGENESIS OF PHE-55; TRP-59 AND LEU-62</scope>
</reference>
<reference key="18">
    <citation type="journal article" date="2002" name="Mol. Cell. Biol.">
        <title>Complex transcriptional effects of p63 isoforms: identification of novel activation and repression domains.</title>
        <authorList>
            <person name="Ghioni P."/>
            <person name="Bolognese F."/>
            <person name="Duijf P.H.G."/>
            <person name="Van Bokhoven H."/>
            <person name="Mantovani R."/>
            <person name="Guerrini L."/>
        </authorList>
    </citation>
    <scope>FUNCTION</scope>
    <scope>DOMAIN</scope>
</reference>
<reference key="19">
    <citation type="journal article" date="2002" name="EMBO J.">
        <title>SSRP1 functions as a co-activator of the transcriptional activator p63.</title>
        <authorList>
            <person name="Zeng S.X."/>
            <person name="Dai M.-S."/>
            <person name="Keller D.M."/>
            <person name="Lu H."/>
        </authorList>
    </citation>
    <scope>FUNCTION</scope>
    <scope>INTERACTION WITH SSRP1</scope>
</reference>
<reference key="20">
    <citation type="journal article" date="2004" name="EMBO J.">
        <authorList>
            <person name="Zeng S.X."/>
            <person name="Dai M.-S."/>
            <person name="Keller D.M."/>
            <person name="Lu H."/>
        </authorList>
    </citation>
    <scope>ERRATUM OF PUBMED:12374749</scope>
</reference>
<reference key="21">
    <citation type="journal article" date="2008" name="Cell Death Differ.">
        <title>WW domain-containing E3 ubiquitin protein ligase 1 targets p63 transcription factor for ubiquitin-mediated proteasomal degradation and regulates apoptosis.</title>
        <authorList>
            <person name="Li Y."/>
            <person name="Zhou Z."/>
            <person name="Chen C."/>
        </authorList>
    </citation>
    <scope>UBIQUITINATION</scope>
    <scope>INTERACTION WITH WWP1</scope>
    <scope>MUTAGENESIS OF TYR-543</scope>
</reference>
<reference key="22">
    <citation type="journal article" date="2008" name="J. Cancer Res. Clin. Oncol.">
        <title>SCC-112 gene is involved in tumor progression and promotes the cell proliferation in G2/M phase.</title>
        <authorList>
            <person name="Zheng M.Z."/>
            <person name="Zheng L.M."/>
            <person name="Zeng Y.X."/>
        </authorList>
    </citation>
    <scope>INTERACTION WITH PDS5A</scope>
</reference>
<reference key="23">
    <citation type="journal article" date="2010" name="Nucleic Acids Res.">
        <title>NIR, an inhibitor of histone acetyltransferases, regulates transcription factor TAp63 and is controlled by the cell cycle.</title>
        <authorList>
            <person name="Heyne K."/>
            <person name="Willnecker V."/>
            <person name="Schneider J."/>
            <person name="Conrad M."/>
            <person name="Raulf N."/>
            <person name="Schule R."/>
            <person name="Roemer K."/>
        </authorList>
    </citation>
    <scope>FUNCTION</scope>
    <scope>INTERACTION WITH NOC2L</scope>
    <scope>SUBCELLULAR LOCATION</scope>
</reference>
<reference key="24">
    <citation type="journal article" date="2012" name="Am. J. Hum. Genet.">
        <title>Exome sequence identifies RIPK4 as the Bartsocas-Papas syndrome locus.</title>
        <authorList>
            <person name="Mitchell K."/>
            <person name="O'Sullivan J."/>
            <person name="Missero C."/>
            <person name="Blair E."/>
            <person name="Richardson R."/>
            <person name="Anderson B."/>
            <person name="Antonini D."/>
            <person name="Murray J.C."/>
            <person name="Shanske A.L."/>
            <person name="Schutte B.C."/>
            <person name="Romano R.A."/>
            <person name="Sinha S."/>
            <person name="Bhaskar S.S."/>
            <person name="Black G.C."/>
            <person name="Dixon J."/>
            <person name="Dixon M.J."/>
        </authorList>
    </citation>
    <scope>FUNCTION</scope>
</reference>
<reference key="25">
    <citation type="submission" date="2004-11" db="PDB data bank">
        <title>Solution structure of the C-terminal domain of p63.</title>
        <authorList>
            <person name="Cadot B."/>
            <person name="Candi E."/>
            <person name="Cicero D.O."/>
            <person name="Desideri A."/>
            <person name="Mele S."/>
            <person name="Melino G."/>
            <person name="Paci M."/>
        </authorList>
    </citation>
    <scope>STRUCTURE BY NMR OF 540-610</scope>
</reference>
<reference key="26">
    <citation type="journal article" date="1999" name="Cell">
        <title>Heterozygous germline mutations in the p53 homolog p63 are the cause of EEC syndrome.</title>
        <authorList>
            <person name="Celli J."/>
            <person name="Duijf P.H.G."/>
            <person name="Hamel B.C.J."/>
            <person name="Bamshad M."/>
            <person name="Kramer B."/>
            <person name="Smits A.P.T."/>
            <person name="Newbury-Ecob R."/>
            <person name="Hennekam R.C.M."/>
            <person name="Van Buggenhout G."/>
            <person name="van Haeringen A."/>
            <person name="Woods C.G."/>
            <person name="van Essen A.J."/>
            <person name="de Waal R."/>
            <person name="Vriend G."/>
            <person name="Haber D.A."/>
            <person name="Yang A."/>
            <person name="McKeon F."/>
            <person name="Brunner H.G."/>
            <person name="van Bokhoven H."/>
        </authorList>
    </citation>
    <scope>VARIANTS EEC3 TRP-243; GLN-243 AND ARG-345</scope>
</reference>
<reference key="27">
    <citation type="journal article" date="2000" name="Am. J. Hum. Genet.">
        <title>Split-hand/split-foot malformation is caused by mutations in the p63 gene on 3q27.</title>
        <authorList>
            <person name="Ianakiev P."/>
            <person name="Kilpatrick M.W."/>
            <person name="Toudjarska I."/>
            <person name="Basel D."/>
            <person name="Beighton P."/>
            <person name="Tsipouras P."/>
        </authorList>
    </citation>
    <scope>VARIANTS SHFM4 GLU-233 AND CYS-319</scope>
    <scope>VARIANTS EEC3 HIS-318 AND GLN-343</scope>
</reference>
<reference key="28">
    <citation type="journal article" date="2001" name="Eur. J. Hum. Genet.">
        <title>TP63 gene mutation in ADULT syndrome.</title>
        <authorList>
            <person name="Amiel J."/>
            <person name="Bougeard G."/>
            <person name="Francannet C."/>
            <person name="Raclin V."/>
            <person name="Munnich A."/>
            <person name="Lyonnet S."/>
            <person name="Frebourg T."/>
        </authorList>
    </citation>
    <scope>VARIANT ADULT SYNDROME HIS-6 (ISOFORMS 2; 4; 6; 8; 10 AND 12)</scope>
</reference>
<reference key="29">
    <citation type="journal article" date="2001" name="Hum. Mol. Genet.">
        <title>Hay-Wells syndrome is caused by heterozygous missense mutations in the SAM domain of p63.</title>
        <authorList>
            <person name="McGrath J.A."/>
            <person name="Duijf P.H.G."/>
            <person name="Doetsch V."/>
            <person name="Irvine A.D."/>
            <person name="de Waal R."/>
            <person name="Vanmolkot K.R."/>
            <person name="Wessagowit V."/>
            <person name="Kelly A."/>
            <person name="Atherton D.J."/>
            <person name="Griffiths W.A."/>
            <person name="Orlow S.J."/>
            <person name="van Haeringen A."/>
            <person name="Ausems M.G."/>
            <person name="Yang A."/>
            <person name="McKeon F."/>
            <person name="Bamshad M.A."/>
            <person name="Brunner H.G."/>
            <person name="Hamel B.C.J."/>
            <person name="van Bokhoven H."/>
        </authorList>
    </citation>
    <scope>VARIANTS AEC PHE-553 AND GLY-561</scope>
</reference>
<reference key="30">
    <citation type="journal article" date="2001" name="Am. J. Hum. Genet.">
        <title>p63 gene mutations in EEC syndrome, limb-mammary syndrome, and isolated split hand-split foot malformation suggest a genotype-phenotype correlation.</title>
        <authorList>
            <person name="van Bokhoven H."/>
            <person name="Hamel B.C.J."/>
            <person name="Bamshad M."/>
            <person name="Sangiorgi E."/>
            <person name="Gurrieri F."/>
            <person name="Duijf P.H.G."/>
            <person name="Vanmolkot K.R.J."/>
            <person name="van Beusekom E."/>
            <person name="van Beersum S.E.C."/>
            <person name="Celli J."/>
            <person name="Merkx G.F.M."/>
            <person name="Tenconi R."/>
            <person name="Fryns J.-P."/>
            <person name="Verloes A."/>
            <person name="Newbury-Ecob R.A."/>
            <person name="Raas-Rotschild A."/>
            <person name="Majewski F."/>
            <person name="Beemer F.A."/>
            <person name="Janecke A."/>
            <person name="Chitayat D."/>
            <person name="Crisponi G."/>
            <person name="Kayserili H."/>
            <person name="Yates J.R.W."/>
            <person name="Neri G."/>
            <person name="Brunner H.G."/>
        </authorList>
    </citation>
    <scope>VARIANTS EEC3 GLN-243; TRP-243; GLN-266; TYR-308; ASN-311; CYS-318; HIS-318; GLN-318; CYS-319; HIS-319; SER-319; TRP-343; GLN-343; ARG-345; SER-347; SER-348 AND HIS-351</scope>
    <scope>VARIANTS SHFM4 PRO-193 INS; GLU-232 AND HIS-319</scope>
    <scope>INVOLVEMENT IN LMS</scope>
</reference>
<reference key="31">
    <citation type="journal article" date="2002" name="Hum. Mol. Genet.">
        <title>Gain-of-function mutation in ADULT syndrome reveals the presence of a second transactivation domain in p63.</title>
        <authorList>
            <person name="Duijf P.H.G."/>
            <person name="Vanmolkot K.R."/>
            <person name="Propping P."/>
            <person name="Friedl W."/>
            <person name="Krieger E."/>
            <person name="McKeon F."/>
            <person name="Doetsch V."/>
            <person name="Brunner H.G."/>
            <person name="van Bokhoven H."/>
        </authorList>
    </citation>
    <scope>VARIANT ADULT SYNDROME GLN-337</scope>
</reference>
<reference key="32">
    <citation type="journal article" date="2003" name="Am. J. Med. Genet. A">
        <title>EEC syndrome type 3 with a heterozygous germline mutation in the P63 gene and B cell lymphoma.</title>
        <authorList>
            <person name="Akahoshi K."/>
            <person name="Sakazume S."/>
            <person name="Kosaki K."/>
            <person name="Ohashi H."/>
            <person name="Fukushima Y."/>
        </authorList>
    </citation>
    <scope>VARIANT EEC3 GLY-351</scope>
</reference>
<reference key="33">
    <citation type="journal article" date="2003" name="Eur. J. Hum. Genet.">
        <title>The Rapp-Hodgkin syndrome results from mutations of the TP63 gene.</title>
        <authorList>
            <person name="Bougeard G."/>
            <person name="Hadj-Rabia S."/>
            <person name="Faivre L."/>
            <person name="Sarafan-Vasseur N."/>
            <person name="Frebourg T."/>
        </authorList>
    </citation>
    <scope>VARIANT RHS HIS-318</scope>
    <scope>CHARACTERIZATION OF VARIANT RHS HIS-318</scope>
</reference>
<reference key="34">
    <citation type="journal article" date="2003" name="J. Dent. Res.">
        <title>Heterozygous mutation in the SAM domain of p63 underlies Rapp-Hodgkin ectodermal dysplasia.</title>
        <authorList>
            <person name="Kantaputra P.N."/>
            <person name="Hamada T."/>
            <person name="Kumchai T."/>
            <person name="McGrath J.A."/>
        </authorList>
    </citation>
    <scope>VARIANT RHS PRO-580</scope>
</reference>
<reference key="35">
    <citation type="journal article" date="2004" name="Clin. Genet.">
        <title>Molecular evidence that AEC syndrome and Rapp-Hodgkin syndrome are variable expression of a single genetic disorder.</title>
        <authorList>
            <person name="Bertola D.R."/>
            <person name="Kim C.A."/>
            <person name="Albano L.M.J."/>
            <person name="Scheffer H."/>
            <person name="Meijer R."/>
            <person name="van Bokhoven H."/>
        </authorList>
    </citation>
    <scope>VARIANT RHS THR-549</scope>
</reference>
<reference key="36">
    <citation type="journal article" date="2006" name="J. Med. Genet.">
        <title>A mutation of the p63 gene in non-syndromic cleft lip.</title>
        <authorList>
            <person name="Leoyklang P."/>
            <person name="Siriwan P."/>
            <person name="Shotelersuk V."/>
        </authorList>
    </citation>
    <scope>INVOLVEMENT IN OFC8</scope>
    <scope>VARIANT OFC8 GLY-352</scope>
    <scope>VARIANTS LEU-129 AND HIS-603</scope>
</reference>
<reference key="37">
    <citation type="journal article" date="2019" name="Hum. Mutat.">
        <title>TP63-truncating variants cause isolated premature ovarian insufficiency.</title>
        <authorList>
            <person name="Tucker E.J."/>
            <person name="Jaillard S."/>
            <person name="Grover S.R."/>
            <person name="van den Bergen J."/>
            <person name="Robevska G."/>
            <person name="Bell K.M."/>
            <person name="Sadedin S."/>
            <person name="Hanna C."/>
            <person name="Dulon J."/>
            <person name="Touraine P."/>
            <person name="Sinclair A.H."/>
        </authorList>
    </citation>
    <scope>VARIANTS POF21 594-ARG--GLU-680 DEL AND 598-TRP--GLU-680 DEL</scope>
    <scope>INVOLVEMENT IN POF21</scope>
</reference>
<reference key="38">
    <citation type="journal article" date="2020" name="Clin. Genet.">
        <title>Novel phenotype of syndromic premature ovarian insufficiency associated with TP63 molecular defect.</title>
        <authorList>
            <person name="Mathorne S.W."/>
            <person name="Ravn P."/>
            <person name="Hansen D."/>
            <person name="Beck-Nielsen S.S."/>
            <person name="Gjoerup H."/>
            <person name="Soerensen K.P."/>
            <person name="Fagerberg C.R."/>
        </authorList>
    </citation>
    <scope>VARIANT LMS 643-ARG--GLU-680 DEL</scope>
</reference>
<reference key="39">
    <citation type="journal article" date="2022" name="Hum. Mutat.">
        <title>Dominant TP63 missense variants lead to constitutive activation and premature ovarian insufficiency.</title>
        <authorList>
            <person name="Tucker E.J."/>
            <person name="Gutfreund N."/>
            <person name="Belaud-Rotureau M.A."/>
            <person name="Gilot D."/>
            <person name="Brun T."/>
            <person name="Kline B.L."/>
            <person name="Bell K.M."/>
            <person name="Domin-Bernhard M."/>
            <person name="Theard C."/>
            <person name="Touraine P."/>
            <person name="Robevska G."/>
            <person name="van van den Bergen J."/>
            <person name="Ayers K.L."/>
            <person name="Sinclair A.H."/>
            <person name="Doetsch V."/>
            <person name="Jaillard S."/>
        </authorList>
    </citation>
    <scope>VARIANTS POF21 CYS-18; PRO-97 AND CYS-647</scope>
    <scope>INVOLVEMENT IN POF21</scope>
    <scope>CHARACTERIZATION OF VARIANTS POF21 CYS-18; PRO-97 AND CYS-647</scope>
    <scope>MUTAGENESIS OF TYR-18; ARG-97; ARG-643 AND ARG-647</scope>
</reference>
<reference key="40">
    <citation type="journal article" date="2023" name="J. Clin. Invest.">
        <title>TP63 gain-of-function mutations cause premature ovarian insufficiency by inducing oocyte apoptosis.</title>
        <authorList>
            <person name="Huang C."/>
            <person name="Zhao S."/>
            <person name="Yang Y."/>
            <person name="Guo T."/>
            <person name="Ke H."/>
            <person name="Mi X."/>
            <person name="Qin Y."/>
            <person name="Chen Z.J."/>
            <person name="Zhao S."/>
        </authorList>
    </citation>
    <scope>VARIANTS POF21 ASN-285; ALA-538; ILE-567; 594-ARG--GLU-680 DEL; GLN-643; PRO-646; CYS-647 AND GLN-655</scope>
    <scope>INVOLVEMENT IN POF21</scope>
    <scope>CHARACTERIZATION OF VARIANTS POF21 ASN-285; ALA-538; ILE-567; 594-ARG--GLU-680 DEL; GLN-643; PRO-646; CYS-647 AND GLN-655</scope>
</reference>
<proteinExistence type="evidence at protein level"/>
<comment type="function">
    <text evidence="10 13 14 15 23 24 31">Acts as a sequence specific DNA binding transcriptional activator or repressor. The isoforms contain a varying set of transactivation and auto-regulating transactivation inhibiting domains thus showing an isoform specific activity. Isoform 2 activates RIPK4 transcription. May be required in conjunction with TP73/p73 for initiation of p53/TP53 dependent apoptosis in response to genotoxic insults and the presence of activated oncogenes. Involved in Notch signaling by probably inducing JAG1 and JAG2. Plays a role in the regulation of epithelial morphogenesis. The ratio of DeltaN-type and TA*-type isoforms may govern the maintenance of epithelial stem cell compartments and regulate the initiation of epithelial stratification from the undifferentiated embryonal ectoderm. Required for limb formation from the apical ectodermal ridge. Activates transcription of the p21 promoter.</text>
</comment>
<comment type="cofactor">
    <cofactor evidence="1">
        <name>Zn(2+)</name>
        <dbReference type="ChEBI" id="CHEBI:29105"/>
    </cofactor>
    <text evidence="1">Binds 1 zinc ion per subunit.</text>
</comment>
<comment type="subunit">
    <text evidence="3 11 13 21 22 23 29">Binds DNA as a homotetramer. Isoform composition of the tetramer may determine transactivation activity. Isoforms Alpha and Gamma interact with HIPK2. Interacts with SSRP1, leading to stimulate coactivator activity. Isoform 1 and isoform 2 interact with WWP1. Interacts with PDS5A. Isoform 5 (via activation domain) interacts with NOC2L.</text>
</comment>
<comment type="interaction">
    <interactant intactId="EBI-2337775">
        <id>Q9H3D4</id>
    </interactant>
    <interactant intactId="EBI-400434">
        <id>P35637</id>
        <label>FUS</label>
    </interactant>
    <organismsDiffer>false</organismsDiffer>
    <experiments>2</experiments>
</comment>
<comment type="interaction">
    <interactant intactId="EBI-2337775">
        <id>Q9H3D4</id>
    </interactant>
    <interactant intactId="EBI-348345">
        <id>Q9H2X6</id>
        <label>HIPK2</label>
    </interactant>
    <organismsDiffer>false</organismsDiffer>
    <experiments>2</experiments>
</comment>
<comment type="interaction">
    <interactant intactId="EBI-2337775">
        <id>Q9H3D4</id>
    </interactant>
    <interactant intactId="EBI-1044873">
        <id>Q99729</id>
        <label>HNRNPAB</label>
    </interactant>
    <organismsDiffer>false</organismsDiffer>
    <experiments>3</experiments>
</comment>
<comment type="interaction">
    <interactant intactId="EBI-2337775">
        <id>Q9H3D4</id>
    </interactant>
    <interactant intactId="EBI-304185">
        <id>P61978</id>
        <label>HNRNPK</label>
    </interactant>
    <organismsDiffer>false</organismsDiffer>
    <experiments>2</experiments>
</comment>
<comment type="interaction">
    <interactant intactId="EBI-2337775">
        <id>Q9H3D4</id>
    </interactant>
    <interactant intactId="EBI-1564678">
        <id>Q96J02</id>
        <label>ITCH</label>
    </interactant>
    <organismsDiffer>false</organismsDiffer>
    <experiments>2</experiments>
</comment>
<comment type="interaction">
    <interactant intactId="EBI-2337775">
        <id>Q9H3D4</id>
    </interactant>
    <interactant intactId="EBI-348259">
        <id>Q96EZ8</id>
        <label>MCRS1</label>
    </interactant>
    <organismsDiffer>false</organismsDiffer>
    <experiments>3</experiments>
</comment>
<comment type="interaction">
    <interactant intactId="EBI-2337775">
        <id>Q9H3D4</id>
    </interactant>
    <interactant intactId="EBI-716291">
        <id>Q9UFN0</id>
        <label>NIPSNAP3A</label>
    </interactant>
    <organismsDiffer>false</organismsDiffer>
    <experiments>2</experiments>
</comment>
<comment type="interaction">
    <interactant intactId="EBI-2337775">
        <id>Q9H3D4</id>
    </interactant>
    <interactant intactId="EBI-448369">
        <id>Q96FA3</id>
        <label>PELI1</label>
    </interactant>
    <organismsDiffer>false</organismsDiffer>
    <experiments>3</experiments>
</comment>
<comment type="interaction">
    <interactant intactId="EBI-2337775">
        <id>Q9H3D4</id>
    </interactant>
    <interactant intactId="EBI-448407">
        <id>Q9HAT8</id>
        <label>PELI2</label>
    </interactant>
    <organismsDiffer>false</organismsDiffer>
    <experiments>3</experiments>
</comment>
<comment type="interaction">
    <interactant intactId="EBI-2337775">
        <id>Q9H3D4</id>
    </interactant>
    <interactant intactId="EBI-714158">
        <id>Q13526</id>
        <label>PIN1</label>
    </interactant>
    <organismsDiffer>false</organismsDiffer>
    <experiments>3</experiments>
</comment>
<comment type="interaction">
    <interactant intactId="EBI-2337775">
        <id>Q9H3D4</id>
    </interactant>
    <interactant intactId="EBI-704279">
        <id>Q05655</id>
        <label>PRKCD</label>
    </interactant>
    <organismsDiffer>false</organismsDiffer>
    <experiments>2</experiments>
</comment>
<comment type="interaction">
    <interactant intactId="EBI-2337775">
        <id>Q9H3D4</id>
    </interactant>
    <interactant intactId="EBI-1040141">
        <id>Q15796</id>
        <label>SMAD2</label>
    </interactant>
    <organismsDiffer>false</organismsDiffer>
    <experiments>3</experiments>
</comment>
<comment type="interaction">
    <interactant intactId="EBI-2337775">
        <id>Q9H3D4</id>
    </interactant>
    <interactant intactId="EBI-366083">
        <id>P04637</id>
        <label>TP53</label>
    </interactant>
    <organismsDiffer>false</organismsDiffer>
    <experiments>5</experiments>
</comment>
<comment type="interaction">
    <interactant intactId="EBI-2337775">
        <id>Q9H3D4</id>
    </interactant>
    <interactant intactId="EBI-77642">
        <id>Q13625</id>
        <label>TP53BP2</label>
    </interactant>
    <organismsDiffer>false</organismsDiffer>
    <experiments>2</experiments>
</comment>
<comment type="interaction">
    <interactant intactId="EBI-2337775">
        <id>Q9H3D4</id>
    </interactant>
    <interactant intactId="EBI-2337775">
        <id>Q9H3D4</id>
        <label>TP63</label>
    </interactant>
    <organismsDiffer>false</organismsDiffer>
    <experiments>4</experiments>
</comment>
<comment type="interaction">
    <interactant intactId="EBI-2337775">
        <id>Q9H3D4</id>
    </interactant>
    <interactant intactId="EBI-389606">
        <id>O15350</id>
        <label>TP73</label>
    </interactant>
    <organismsDiffer>false</organismsDiffer>
    <experiments>4</experiments>
</comment>
<comment type="interaction">
    <interactant intactId="EBI-2337775">
        <id>Q9H3D4</id>
    </interactant>
    <interactant intactId="EBI-7353612">
        <id>P57075-2</id>
        <label>UBASH3A</label>
    </interactant>
    <organismsDiffer>false</organismsDiffer>
    <experiments>3</experiments>
</comment>
<comment type="interaction">
    <interactant intactId="EBI-2337775">
        <id>Q9H3D4</id>
    </interactant>
    <interactant intactId="EBI-1044059">
        <id>P46937</id>
        <label>YAP1</label>
    </interactant>
    <organismsDiffer>false</organismsDiffer>
    <experiments>2</experiments>
</comment>
<comment type="interaction">
    <interactant intactId="EBI-2400586">
        <id>Q9H3D4-1</id>
    </interactant>
    <interactant intactId="EBI-604615">
        <id>Q8TDN4</id>
        <label>CABLES1</label>
    </interactant>
    <organismsDiffer>false</organismsDiffer>
    <experiments>7</experiments>
</comment>
<comment type="interaction">
    <interactant intactId="EBI-2400586">
        <id>Q9H3D4-1</id>
    </interactant>
    <interactant intactId="EBI-1044873">
        <id>Q99729</id>
        <label>HNRNPAB</label>
    </interactant>
    <organismsDiffer>false</organismsDiffer>
    <experiments>2</experiments>
</comment>
<comment type="interaction">
    <interactant intactId="EBI-6481107">
        <id>Q9H3D4-2</id>
    </interactant>
    <interactant intactId="EBI-1044873">
        <id>Q99729</id>
        <label>HNRNPAB</label>
    </interactant>
    <organismsDiffer>false</organismsDiffer>
    <experiments>2</experiments>
</comment>
<comment type="interaction">
    <interactant intactId="EBI-6481107">
        <id>Q9H3D4-2</id>
    </interactant>
    <interactant intactId="EBI-8298169">
        <id>Q9UPW6</id>
        <label>SATB2</label>
    </interactant>
    <organismsDiffer>false</organismsDiffer>
    <experiments>5</experiments>
</comment>
<comment type="subcellular location">
    <subcellularLocation>
        <location evidence="14 23">Nucleus</location>
    </subcellularLocation>
</comment>
<comment type="alternative products">
    <event type="alternative promoter"/>
    <event type="alternative splicing"/>
    <isoform>
        <id>Q9H3D4-1</id>
        <name>1</name>
        <name>TA*-alpha</name>
        <name>TAp63alpha</name>
        <name>P51B</name>
        <sequence type="displayed"/>
    </isoform>
    <isoform>
        <id>Q9H3D4-2</id>
        <name>2</name>
        <name>DeltaN-alpha</name>
        <name>DeltaNp63 alpha</name>
        <name>P51delNalpha</name>
        <sequence type="described" ref="VSP_012465"/>
    </isoform>
    <isoform>
        <id>Q9H3D4-3</id>
        <name>3</name>
        <name>TA*-beta</name>
        <name>TAp63beta</name>
        <sequence type="described" ref="VSP_012470"/>
    </isoform>
    <isoform>
        <id>Q9H3D4-4</id>
        <name>4</name>
        <name>DeltaN-beta</name>
        <name>DeltaNp63 beta</name>
        <name>P51delNbeta</name>
        <sequence type="described" ref="VSP_012465 VSP_012470"/>
    </isoform>
    <isoform>
        <id>Q9H3D4-5</id>
        <name>5</name>
        <name>TA*-gamma</name>
        <name>TAp63gamma</name>
        <name>P51A</name>
        <sequence type="described" ref="VSP_012468"/>
    </isoform>
    <isoform>
        <id>Q9H3D4-6</id>
        <name>6</name>
        <name>DeltaN-gamma</name>
        <name>DeltaNp63gamma</name>
        <name>P51delNgamma</name>
        <sequence type="described" ref="VSP_012465 VSP_012468"/>
    </isoform>
    <isoform>
        <id>Q9H3D4-7</id>
        <name>7</name>
        <name>TA*-delta</name>
        <name>TAp63delta</name>
        <name>P51delta</name>
        <sequence type="described" ref="VSP_012469"/>
    </isoform>
    <isoform>
        <id>Q9H3D4-8</id>
        <name>8</name>
        <name>DeltaN-delta</name>
        <sequence type="described" ref="VSP_012465 VSP_012469"/>
    </isoform>
    <isoform>
        <id>Q9H3D4-9</id>
        <name>9</name>
        <name>TA*-epsilon</name>
        <sequence type="described" ref="VSP_012466"/>
    </isoform>
    <isoform>
        <id>Q9H3D4-10</id>
        <name>10</name>
        <name>DeltaN-epsilon</name>
        <name>DeltaNp73L</name>
        <sequence type="described" ref="VSP_012465 VSP_012466"/>
    </isoform>
    <isoform>
        <id>Q9H3D4-11</id>
        <name>11</name>
        <name>P63 delta</name>
        <sequence type="described" ref="VSP_012467"/>
    </isoform>
    <isoform>
        <id>Q9H3D4-12</id>
        <name>12</name>
        <sequence type="described" ref="VSP_012465 VSP_012467"/>
    </isoform>
</comment>
<comment type="tissue specificity">
    <text evidence="8 31">Widely expressed, notably in heart, kidney, placenta, prostate, skeletal muscle, testis and thymus, although the precise isoform varies according to tissue type. Progenitor cell layers of skin, breast, eye and prostate express high levels of DeltaN-type isoforms. Isoform 10 is predominantly expressed in skin squamous cell carcinomas, but not in normal skin tissues.</text>
</comment>
<comment type="domain">
    <text evidence="14 15">The transactivation inhibitory domain (TID) can interact with, and inhibit the activity of the N-terminal transcriptional activation domain of TA*-type isoforms.</text>
</comment>
<comment type="PTM">
    <text evidence="1">May be sumoylated.</text>
</comment>
<comment type="PTM">
    <text evidence="22">Ubiquitinated. Polyubiquitination involves WWP1 and leads to proteasomal degradation of this protein.</text>
</comment>
<comment type="disease" evidence="12">
    <disease id="DI-00028">
        <name>Acro-dermato-ungual-lacrimal-tooth syndrome</name>
        <acronym>ADULT syndrome</acronym>
        <description>A form of ectodermal dysplasia. Ectodermal dysplasia defines a heterogeneous group of disorders due to abnormal development of two or more ectodermal structures. ADULT syndrome involves ectrodactyly, syndactyly, finger- and toenail dysplasia, hypoplastic breasts and nipples, intensive freckling, lacrimal duct atresia, frontal alopecia, primary hypodontia and loss of permanent teeth. ADULT syndrome differs significantly from EEC3 syndrome by the absence of facial clefting. Inheritance is autosomal dominant.</description>
        <dbReference type="MIM" id="103285"/>
    </disease>
    <text>The disease is caused by variants affecting the gene represented in this entry.</text>
</comment>
<comment type="disease" evidence="7">
    <disease id="DI-00122">
        <name>Ankyloblepharon-ectodermal defects-cleft lip/palate</name>
        <acronym>AEC</acronym>
        <description>An autosomal dominant condition characterized by congenital ectodermal dysplasia with coarse, wiry, sparse hair, dystrophic nails, slight hypohidrosis, scalp infections, ankyloblepharon filiform adnatum, maxillary hypoplasia, hypodontia and cleft lip/palate.</description>
        <dbReference type="MIM" id="106260"/>
    </disease>
    <text>The disease is caused by variants affecting the gene represented in this entry.</text>
</comment>
<comment type="disease" evidence="5 6 9 17">
    <disease id="DI-00434">
        <name>Ectrodactyly, ectodermal dysplasia, and cleft lip/palate syndrome 3</name>
        <acronym>EEC3</acronym>
        <description>A form of ectodermal dysplasia, a heterogeneous group of disorders due to abnormal development of two or more ectodermal structures. It is an autosomal dominant syndrome characterized by ectrodactyly of hands and feet, ectodermal dysplasia and facial clefting.</description>
        <dbReference type="MIM" id="604292"/>
    </disease>
    <text>The disease is caused by variants affecting the gene represented in this entry.</text>
</comment>
<comment type="disease" evidence="6 9">
    <disease id="DI-02328">
        <name>Split-hand/foot malformation 4</name>
        <acronym>SHFM4</acronym>
        <description>A limb malformation involving the central rays of the autopod and presenting with syndactyly, median clefts of the hands and feet, and aplasia and/or hypoplasia of the phalanges, metacarpals, and metatarsals. Some patients have been found to have intellectual disability, ectodermal and craniofacial findings, and orofacial clefting.</description>
        <dbReference type="MIM" id="605289"/>
    </disease>
    <text>The disease is caused by variants affecting the gene represented in this entry.</text>
</comment>
<comment type="disease" evidence="9 26">
    <disease id="DI-01907">
        <name>Limb-mammary syndrome</name>
        <acronym>LMS</acronym>
        <description>Characterized by ectrodactyly, cleft palate and mammary-gland abnormalities.</description>
        <dbReference type="MIM" id="603543"/>
    </disease>
    <text>The disease is caused by variants affecting the gene represented in this entry.</text>
</comment>
<comment type="disease" evidence="16 18 19">
    <disease id="DI-00428">
        <name>Rapp-Hodgkin syndrome</name>
        <acronym>RHS</acronym>
        <description>A form of ectodermal dysplasia, a heterogeneous group of disorders due to abnormal development of two or more ectodermal structures. Characterized by the combination of anhidrotic ectodermal dysplasia, cleft lip, and cleft palate. The clinical syndrome is comprised of a characteristic facies (narrow nose and small mouth), wiry, slow-growing, and uncombable hair, sparse eyelashes and eyebrows, obstructed lacrimal puncta/epiphora, bilateral stenosis of external auditory canals, microsomia, hypodontia, cone-shaped incisors, enamel hypoplasia, dystrophic nails, and cleft lip/cleft palate. RHS inheritance is autosomal dominant.</description>
        <dbReference type="MIM" id="129400"/>
    </disease>
    <text>The disease is caused by variants affecting the gene represented in this entry.</text>
</comment>
<comment type="disease" evidence="20">
    <disease id="DI-00829">
        <name>Orofacial cleft 8</name>
        <acronym>OFC8</acronym>
        <description>A birth defect consisting of cleft lips with or without cleft palate. Cleft lips are associated with cleft palate in two-third of cases. A cleft lip can occur on one or both sides and range in severity from a simple notch in the upper lip to a complete opening in the lip extending into the floor of the nostril and involving the upper gum.</description>
        <dbReference type="MIM" id="618149"/>
    </disease>
    <text>The disease is caused by variants affecting the gene represented in this entry.</text>
</comment>
<comment type="disease" evidence="25 27 28">
    <disease id="DI-06641">
        <name>Premature ovarian failure 21</name>
        <acronym>POF21</acronym>
        <description>A form of premature ovarian failure, an ovarian disorder defined as the cessation of ovarian function under the age of 40 years. It is characterized by oligomenorrhea or amenorrhea, in the presence of elevated levels of serum gonadotropins and low estradiol. POF21 inheritance is autosomal dominant.</description>
        <dbReference type="MIM" id="620311"/>
    </disease>
    <text evidence="28">The disease is caused by variants affecting the gene represented in this entry. Gain-of-function variants located in the transactivation inhibition domain are responsible for premature ovarian failure by inducing accelerated oocyte loss, as shown in mutant mice carrying the pathogenic variant p.Arg647Cys.</text>
</comment>
<comment type="miscellaneous">
    <molecule>Isoform 1</molecule>
    <text>Produced by alternative promoter usage.</text>
</comment>
<comment type="miscellaneous">
    <molecule>Isoform 2</molecule>
    <text evidence="39">Produced by alternative promoter usage.</text>
</comment>
<comment type="miscellaneous">
    <molecule>Isoform 3</molecule>
    <text evidence="39">Produced by alternative splicing of isoform 1.</text>
</comment>
<comment type="miscellaneous">
    <molecule>Isoform 4</molecule>
    <text evidence="39">Produced by alternative splicing of isoform 2.</text>
</comment>
<comment type="miscellaneous">
    <molecule>Isoform 5</molecule>
    <text evidence="39">Produced by alternative splicing of isoform 1.</text>
</comment>
<comment type="miscellaneous">
    <molecule>Isoform 6</molecule>
    <text evidence="39">Produced by alternative splicing of isoform 2.</text>
</comment>
<comment type="miscellaneous">
    <molecule>Isoform 7</molecule>
    <text evidence="39">Produced by alternative splicing of isoform 1.</text>
</comment>
<comment type="miscellaneous">
    <molecule>Isoform 8</molecule>
    <text evidence="39">Produced by alternative splicing of isoform 2.</text>
</comment>
<comment type="miscellaneous">
    <molecule>Isoform 9</molecule>
    <text evidence="39">Produced by alternative splicing of isoform 1.</text>
</comment>
<comment type="miscellaneous">
    <molecule>Isoform 10</molecule>
    <text evidence="39">Produced by alternative splicing of isoform 2.</text>
</comment>
<comment type="miscellaneous">
    <molecule>Isoform 11</molecule>
    <text evidence="39">Produced by alternative splicing of isoform 1.</text>
</comment>
<comment type="miscellaneous">
    <molecule>Isoform 12</molecule>
    <text evidence="39">Produced by alternative splicing of isoform 2.</text>
</comment>
<comment type="similarity">
    <text evidence="39">Belongs to the p53 family.</text>
</comment>
<comment type="sequence caution" evidence="39">
    <conflict type="erroneous initiation">
        <sequence resource="EMBL-CDS" id="AAF43486"/>
    </conflict>
</comment>
<comment type="sequence caution" evidence="39">
    <conflict type="erroneous initiation">
        <sequence resource="EMBL-CDS" id="AAF43487"/>
    </conflict>
</comment>
<comment type="sequence caution" evidence="39">
    <conflict type="erroneous initiation">
        <sequence resource="EMBL-CDS" id="AAF43488"/>
    </conflict>
</comment>
<comment type="sequence caution" evidence="39">
    <conflict type="erroneous initiation">
        <sequence resource="EMBL-CDS" id="AAF43489"/>
    </conflict>
</comment>
<comment type="sequence caution" evidence="39">
    <conflict type="frameshift">
        <sequence resource="EMBL-CDS" id="AAF61624"/>
    </conflict>
</comment>
<comment type="sequence caution" evidence="39">
    <conflict type="frameshift">
        <sequence resource="EMBL-CDS" id="BAA32592"/>
    </conflict>
</comment>
<comment type="sequence caution" evidence="39">
    <conflict type="frameshift">
        <sequence resource="EMBL-CDS" id="BAA32593"/>
    </conflict>
</comment>
<comment type="online information" name="Atlas of Genetics and Cytogenetics in Oncology and Haematology">
    <link uri="https://atlasgeneticsoncology.org/gene/365/TP63"/>
</comment>
<gene>
    <name type="primary">TP63</name>
    <name type="synonym">KET</name>
    <name type="synonym">P63</name>
    <name type="synonym">P73H</name>
    <name type="synonym">P73L</name>
    <name type="synonym">TP73L</name>
</gene>
<protein>
    <recommendedName>
        <fullName>Tumor protein 63</fullName>
        <shortName>p63</shortName>
    </recommendedName>
    <alternativeName>
        <fullName>Chronic ulcerative stomatitis protein</fullName>
        <shortName>CUSP</shortName>
    </alternativeName>
    <alternativeName>
        <fullName>Keratinocyte transcription factor KET</fullName>
    </alternativeName>
    <alternativeName>
        <fullName>Transformation-related protein 63</fullName>
        <shortName>TP63</shortName>
    </alternativeName>
    <alternativeName>
        <fullName>Tumor protein p73-like</fullName>
        <shortName>p73L</shortName>
    </alternativeName>
    <alternativeName>
        <fullName>p40</fullName>
    </alternativeName>
    <alternativeName>
        <fullName>p51</fullName>
    </alternativeName>
</protein>
<dbReference type="EMBL" id="AB010153">
    <property type="protein sequence ID" value="BAA32433.1"/>
    <property type="molecule type" value="mRNA"/>
</dbReference>
<dbReference type="EMBL" id="Y16961">
    <property type="protein sequence ID" value="CAA76562.1"/>
    <property type="molecule type" value="mRNA"/>
</dbReference>
<dbReference type="EMBL" id="AF075428">
    <property type="protein sequence ID" value="AAC62633.1"/>
    <property type="molecule type" value="mRNA"/>
</dbReference>
<dbReference type="EMBL" id="AF075429">
    <property type="protein sequence ID" value="AAC62634.1"/>
    <property type="molecule type" value="mRNA"/>
</dbReference>
<dbReference type="EMBL" id="AF075430">
    <property type="protein sequence ID" value="AAC62635.1"/>
    <property type="molecule type" value="mRNA"/>
</dbReference>
<dbReference type="EMBL" id="AF075431">
    <property type="protein sequence ID" value="AAC62636.1"/>
    <property type="molecule type" value="mRNA"/>
</dbReference>
<dbReference type="EMBL" id="AF075432">
    <property type="protein sequence ID" value="AAC62637.1"/>
    <property type="molecule type" value="mRNA"/>
</dbReference>
<dbReference type="EMBL" id="AF075433">
    <property type="protein sequence ID" value="AAC62638.1"/>
    <property type="molecule type" value="mRNA"/>
</dbReference>
<dbReference type="EMBL" id="AF124539">
    <property type="protein sequence ID" value="AAG45607.1"/>
    <property type="molecule type" value="Genomic_DNA"/>
</dbReference>
<dbReference type="EMBL" id="AF124528">
    <property type="protein sequence ID" value="AAG45607.1"/>
    <property type="status" value="JOINED"/>
    <property type="molecule type" value="Genomic_DNA"/>
</dbReference>
<dbReference type="EMBL" id="AF124529">
    <property type="protein sequence ID" value="AAG45607.1"/>
    <property type="status" value="JOINED"/>
    <property type="molecule type" value="Genomic_DNA"/>
</dbReference>
<dbReference type="EMBL" id="AF124531">
    <property type="protein sequence ID" value="AAG45607.1"/>
    <property type="status" value="JOINED"/>
    <property type="molecule type" value="Genomic_DNA"/>
</dbReference>
<dbReference type="EMBL" id="AF124532">
    <property type="protein sequence ID" value="AAG45607.1"/>
    <property type="status" value="JOINED"/>
    <property type="molecule type" value="Genomic_DNA"/>
</dbReference>
<dbReference type="EMBL" id="AF124533">
    <property type="protein sequence ID" value="AAG45607.1"/>
    <property type="status" value="JOINED"/>
    <property type="molecule type" value="Genomic_DNA"/>
</dbReference>
<dbReference type="EMBL" id="AF124534">
    <property type="protein sequence ID" value="AAG45607.1"/>
    <property type="status" value="JOINED"/>
    <property type="molecule type" value="Genomic_DNA"/>
</dbReference>
<dbReference type="EMBL" id="AF124535">
    <property type="protein sequence ID" value="AAG45607.1"/>
    <property type="status" value="JOINED"/>
    <property type="molecule type" value="Genomic_DNA"/>
</dbReference>
<dbReference type="EMBL" id="AF124536">
    <property type="protein sequence ID" value="AAG45607.1"/>
    <property type="status" value="JOINED"/>
    <property type="molecule type" value="Genomic_DNA"/>
</dbReference>
<dbReference type="EMBL" id="AF124537">
    <property type="protein sequence ID" value="AAG45607.1"/>
    <property type="status" value="JOINED"/>
    <property type="molecule type" value="Genomic_DNA"/>
</dbReference>
<dbReference type="EMBL" id="AF124538">
    <property type="protein sequence ID" value="AAG45607.1"/>
    <property type="status" value="JOINED"/>
    <property type="molecule type" value="Genomic_DNA"/>
</dbReference>
<dbReference type="EMBL" id="AF124539">
    <property type="protein sequence ID" value="AAG45608.1"/>
    <property type="molecule type" value="Genomic_DNA"/>
</dbReference>
<dbReference type="EMBL" id="AF124528">
    <property type="protein sequence ID" value="AAG45608.1"/>
    <property type="status" value="JOINED"/>
    <property type="molecule type" value="Genomic_DNA"/>
</dbReference>
<dbReference type="EMBL" id="AF124529">
    <property type="protein sequence ID" value="AAG45608.1"/>
    <property type="status" value="JOINED"/>
    <property type="molecule type" value="Genomic_DNA"/>
</dbReference>
<dbReference type="EMBL" id="AF124531">
    <property type="protein sequence ID" value="AAG45608.1"/>
    <property type="status" value="JOINED"/>
    <property type="molecule type" value="Genomic_DNA"/>
</dbReference>
<dbReference type="EMBL" id="AF124532">
    <property type="protein sequence ID" value="AAG45608.1"/>
    <property type="status" value="JOINED"/>
    <property type="molecule type" value="Genomic_DNA"/>
</dbReference>
<dbReference type="EMBL" id="AF124533">
    <property type="protein sequence ID" value="AAG45608.1"/>
    <property type="status" value="JOINED"/>
    <property type="molecule type" value="Genomic_DNA"/>
</dbReference>
<dbReference type="EMBL" id="AF124534">
    <property type="protein sequence ID" value="AAG45608.1"/>
    <property type="status" value="JOINED"/>
    <property type="molecule type" value="Genomic_DNA"/>
</dbReference>
<dbReference type="EMBL" id="AF124535">
    <property type="protein sequence ID" value="AAG45608.1"/>
    <property type="status" value="JOINED"/>
    <property type="molecule type" value="Genomic_DNA"/>
</dbReference>
<dbReference type="EMBL" id="AF124536">
    <property type="protein sequence ID" value="AAG45608.1"/>
    <property type="status" value="JOINED"/>
    <property type="molecule type" value="Genomic_DNA"/>
</dbReference>
<dbReference type="EMBL" id="AF124537">
    <property type="protein sequence ID" value="AAG45608.1"/>
    <property type="status" value="JOINED"/>
    <property type="molecule type" value="Genomic_DNA"/>
</dbReference>
<dbReference type="EMBL" id="AF124540">
    <property type="protein sequence ID" value="AAG45609.1"/>
    <property type="molecule type" value="Genomic_DNA"/>
</dbReference>
<dbReference type="EMBL" id="AF124528">
    <property type="protein sequence ID" value="AAG45609.1"/>
    <property type="status" value="JOINED"/>
    <property type="molecule type" value="Genomic_DNA"/>
</dbReference>
<dbReference type="EMBL" id="AF124529">
    <property type="protein sequence ID" value="AAG45609.1"/>
    <property type="status" value="JOINED"/>
    <property type="molecule type" value="Genomic_DNA"/>
</dbReference>
<dbReference type="EMBL" id="AF124531">
    <property type="protein sequence ID" value="AAG45609.1"/>
    <property type="status" value="JOINED"/>
    <property type="molecule type" value="Genomic_DNA"/>
</dbReference>
<dbReference type="EMBL" id="AF124532">
    <property type="protein sequence ID" value="AAG45609.1"/>
    <property type="status" value="JOINED"/>
    <property type="molecule type" value="Genomic_DNA"/>
</dbReference>
<dbReference type="EMBL" id="AF124533">
    <property type="protein sequence ID" value="AAG45609.1"/>
    <property type="status" value="JOINED"/>
    <property type="molecule type" value="Genomic_DNA"/>
</dbReference>
<dbReference type="EMBL" id="AF124534">
    <property type="protein sequence ID" value="AAG45609.1"/>
    <property type="status" value="JOINED"/>
    <property type="molecule type" value="Genomic_DNA"/>
</dbReference>
<dbReference type="EMBL" id="AF124535">
    <property type="protein sequence ID" value="AAG45609.1"/>
    <property type="status" value="JOINED"/>
    <property type="molecule type" value="Genomic_DNA"/>
</dbReference>
<dbReference type="EMBL" id="AF124539">
    <property type="protein sequence ID" value="AAG45610.1"/>
    <property type="molecule type" value="Genomic_DNA"/>
</dbReference>
<dbReference type="EMBL" id="AF124530">
    <property type="protein sequence ID" value="AAG45610.1"/>
    <property type="status" value="JOINED"/>
    <property type="molecule type" value="Genomic_DNA"/>
</dbReference>
<dbReference type="EMBL" id="AF124531">
    <property type="protein sequence ID" value="AAG45610.1"/>
    <property type="status" value="JOINED"/>
    <property type="molecule type" value="Genomic_DNA"/>
</dbReference>
<dbReference type="EMBL" id="AF124532">
    <property type="protein sequence ID" value="AAG45610.1"/>
    <property type="status" value="JOINED"/>
    <property type="molecule type" value="Genomic_DNA"/>
</dbReference>
<dbReference type="EMBL" id="AF124533">
    <property type="protein sequence ID" value="AAG45610.1"/>
    <property type="status" value="JOINED"/>
    <property type="molecule type" value="Genomic_DNA"/>
</dbReference>
<dbReference type="EMBL" id="AF124534">
    <property type="protein sequence ID" value="AAG45610.1"/>
    <property type="status" value="JOINED"/>
    <property type="molecule type" value="Genomic_DNA"/>
</dbReference>
<dbReference type="EMBL" id="AF124535">
    <property type="protein sequence ID" value="AAG45610.1"/>
    <property type="status" value="JOINED"/>
    <property type="molecule type" value="Genomic_DNA"/>
</dbReference>
<dbReference type="EMBL" id="AF124536">
    <property type="protein sequence ID" value="AAG45610.1"/>
    <property type="status" value="JOINED"/>
    <property type="molecule type" value="Genomic_DNA"/>
</dbReference>
<dbReference type="EMBL" id="AF124537">
    <property type="protein sequence ID" value="AAG45610.1"/>
    <property type="status" value="JOINED"/>
    <property type="molecule type" value="Genomic_DNA"/>
</dbReference>
<dbReference type="EMBL" id="AF124538">
    <property type="protein sequence ID" value="AAG45610.1"/>
    <property type="status" value="JOINED"/>
    <property type="molecule type" value="Genomic_DNA"/>
</dbReference>
<dbReference type="EMBL" id="AF124539">
    <property type="protein sequence ID" value="AAG45611.1"/>
    <property type="molecule type" value="Genomic_DNA"/>
</dbReference>
<dbReference type="EMBL" id="AF124530">
    <property type="protein sequence ID" value="AAG45611.1"/>
    <property type="status" value="JOINED"/>
    <property type="molecule type" value="Genomic_DNA"/>
</dbReference>
<dbReference type="EMBL" id="AF124531">
    <property type="protein sequence ID" value="AAG45611.1"/>
    <property type="status" value="JOINED"/>
    <property type="molecule type" value="Genomic_DNA"/>
</dbReference>
<dbReference type="EMBL" id="AF124532">
    <property type="protein sequence ID" value="AAG45611.1"/>
    <property type="status" value="JOINED"/>
    <property type="molecule type" value="Genomic_DNA"/>
</dbReference>
<dbReference type="EMBL" id="AF124533">
    <property type="protein sequence ID" value="AAG45611.1"/>
    <property type="status" value="JOINED"/>
    <property type="molecule type" value="Genomic_DNA"/>
</dbReference>
<dbReference type="EMBL" id="AF124534">
    <property type="protein sequence ID" value="AAG45611.1"/>
    <property type="status" value="JOINED"/>
    <property type="molecule type" value="Genomic_DNA"/>
</dbReference>
<dbReference type="EMBL" id="AF124535">
    <property type="protein sequence ID" value="AAG45611.1"/>
    <property type="status" value="JOINED"/>
    <property type="molecule type" value="Genomic_DNA"/>
</dbReference>
<dbReference type="EMBL" id="AF124536">
    <property type="protein sequence ID" value="AAG45611.1"/>
    <property type="status" value="JOINED"/>
    <property type="molecule type" value="Genomic_DNA"/>
</dbReference>
<dbReference type="EMBL" id="AF124537">
    <property type="protein sequence ID" value="AAG45611.1"/>
    <property type="status" value="JOINED"/>
    <property type="molecule type" value="Genomic_DNA"/>
</dbReference>
<dbReference type="EMBL" id="AF124540">
    <property type="protein sequence ID" value="AAG45612.1"/>
    <property type="molecule type" value="Genomic_DNA"/>
</dbReference>
<dbReference type="EMBL" id="AF124531">
    <property type="protein sequence ID" value="AAG45612.1"/>
    <property type="status" value="JOINED"/>
    <property type="molecule type" value="Genomic_DNA"/>
</dbReference>
<dbReference type="EMBL" id="AF124533">
    <property type="protein sequence ID" value="AAG45612.1"/>
    <property type="status" value="JOINED"/>
    <property type="molecule type" value="Genomic_DNA"/>
</dbReference>
<dbReference type="EMBL" id="AF124535">
    <property type="protein sequence ID" value="AAG45612.1"/>
    <property type="status" value="JOINED"/>
    <property type="molecule type" value="Genomic_DNA"/>
</dbReference>
<dbReference type="EMBL" id="AF124534">
    <property type="protein sequence ID" value="AAG45612.1"/>
    <property type="status" value="JOINED"/>
    <property type="molecule type" value="Genomic_DNA"/>
</dbReference>
<dbReference type="EMBL" id="AF124532">
    <property type="protein sequence ID" value="AAG45612.1"/>
    <property type="status" value="JOINED"/>
    <property type="molecule type" value="Genomic_DNA"/>
</dbReference>
<dbReference type="EMBL" id="AF124530">
    <property type="protein sequence ID" value="AAG45612.1"/>
    <property type="status" value="JOINED"/>
    <property type="molecule type" value="Genomic_DNA"/>
</dbReference>
<dbReference type="EMBL" id="AB016072">
    <property type="protein sequence ID" value="BAA32592.1"/>
    <property type="status" value="ALT_FRAME"/>
    <property type="molecule type" value="mRNA"/>
</dbReference>
<dbReference type="EMBL" id="AB016073">
    <property type="protein sequence ID" value="BAA32593.1"/>
    <property type="status" value="ALT_FRAME"/>
    <property type="molecule type" value="mRNA"/>
</dbReference>
<dbReference type="EMBL" id="AF091627">
    <property type="protein sequence ID" value="AAC43038.1"/>
    <property type="molecule type" value="mRNA"/>
</dbReference>
<dbReference type="EMBL" id="AF116770">
    <property type="protein sequence ID" value="AAF43486.1"/>
    <property type="status" value="ALT_INIT"/>
    <property type="molecule type" value="Genomic_DNA"/>
</dbReference>
<dbReference type="EMBL" id="AF116756">
    <property type="protein sequence ID" value="AAF43486.1"/>
    <property type="status" value="JOINED"/>
    <property type="molecule type" value="Genomic_DNA"/>
</dbReference>
<dbReference type="EMBL" id="AF116757">
    <property type="protein sequence ID" value="AAF43486.1"/>
    <property type="status" value="JOINED"/>
    <property type="molecule type" value="Genomic_DNA"/>
</dbReference>
<dbReference type="EMBL" id="AF116759">
    <property type="protein sequence ID" value="AAF43486.1"/>
    <property type="status" value="JOINED"/>
    <property type="molecule type" value="Genomic_DNA"/>
</dbReference>
<dbReference type="EMBL" id="AF116760">
    <property type="protein sequence ID" value="AAF43486.1"/>
    <property type="status" value="JOINED"/>
    <property type="molecule type" value="Genomic_DNA"/>
</dbReference>
<dbReference type="EMBL" id="AF116761">
    <property type="protein sequence ID" value="AAF43486.1"/>
    <property type="status" value="JOINED"/>
    <property type="molecule type" value="Genomic_DNA"/>
</dbReference>
<dbReference type="EMBL" id="AF116762">
    <property type="protein sequence ID" value="AAF43486.1"/>
    <property type="status" value="JOINED"/>
    <property type="molecule type" value="Genomic_DNA"/>
</dbReference>
<dbReference type="EMBL" id="AF116763">
    <property type="protein sequence ID" value="AAF43486.1"/>
    <property type="status" value="JOINED"/>
    <property type="molecule type" value="Genomic_DNA"/>
</dbReference>
<dbReference type="EMBL" id="AF116764">
    <property type="protein sequence ID" value="AAF43486.1"/>
    <property type="status" value="JOINED"/>
    <property type="molecule type" value="Genomic_DNA"/>
</dbReference>
<dbReference type="EMBL" id="AF116765">
    <property type="protein sequence ID" value="AAF43486.1"/>
    <property type="status" value="JOINED"/>
    <property type="molecule type" value="Genomic_DNA"/>
</dbReference>
<dbReference type="EMBL" id="AF116769">
    <property type="protein sequence ID" value="AAF43487.1"/>
    <property type="status" value="ALT_INIT"/>
    <property type="molecule type" value="Genomic_DNA"/>
</dbReference>
<dbReference type="EMBL" id="AF116756">
    <property type="protein sequence ID" value="AAF43487.1"/>
    <property type="status" value="JOINED"/>
    <property type="molecule type" value="Genomic_DNA"/>
</dbReference>
<dbReference type="EMBL" id="AF116757">
    <property type="protein sequence ID" value="AAF43487.1"/>
    <property type="status" value="JOINED"/>
    <property type="molecule type" value="Genomic_DNA"/>
</dbReference>
<dbReference type="EMBL" id="AF116759">
    <property type="protein sequence ID" value="AAF43487.1"/>
    <property type="status" value="JOINED"/>
    <property type="molecule type" value="Genomic_DNA"/>
</dbReference>
<dbReference type="EMBL" id="AF116760">
    <property type="protein sequence ID" value="AAF43487.1"/>
    <property type="status" value="JOINED"/>
    <property type="molecule type" value="Genomic_DNA"/>
</dbReference>
<dbReference type="EMBL" id="AF116761">
    <property type="protein sequence ID" value="AAF43487.1"/>
    <property type="status" value="JOINED"/>
    <property type="molecule type" value="Genomic_DNA"/>
</dbReference>
<dbReference type="EMBL" id="AF116762">
    <property type="protein sequence ID" value="AAF43487.1"/>
    <property type="status" value="JOINED"/>
    <property type="molecule type" value="Genomic_DNA"/>
</dbReference>
<dbReference type="EMBL" id="AF116763">
    <property type="protein sequence ID" value="AAF43487.1"/>
    <property type="status" value="JOINED"/>
    <property type="molecule type" value="Genomic_DNA"/>
</dbReference>
<dbReference type="EMBL" id="AF116764">
    <property type="protein sequence ID" value="AAF43487.1"/>
    <property type="status" value="JOINED"/>
    <property type="molecule type" value="Genomic_DNA"/>
</dbReference>
<dbReference type="EMBL" id="AF116765">
    <property type="protein sequence ID" value="AAF43487.1"/>
    <property type="status" value="JOINED"/>
    <property type="molecule type" value="Genomic_DNA"/>
</dbReference>
<dbReference type="EMBL" id="AF116766">
    <property type="protein sequence ID" value="AAF43487.1"/>
    <property type="status" value="JOINED"/>
    <property type="molecule type" value="Genomic_DNA"/>
</dbReference>
<dbReference type="EMBL" id="AF116767">
    <property type="protein sequence ID" value="AAF43487.1"/>
    <property type="status" value="JOINED"/>
    <property type="molecule type" value="Genomic_DNA"/>
</dbReference>
<dbReference type="EMBL" id="AF116768">
    <property type="protein sequence ID" value="AAF43487.1"/>
    <property type="status" value="JOINED"/>
    <property type="molecule type" value="Genomic_DNA"/>
</dbReference>
<dbReference type="EMBL" id="AF116769">
    <property type="protein sequence ID" value="AAF43488.1"/>
    <property type="status" value="ALT_INIT"/>
    <property type="molecule type" value="Genomic_DNA"/>
</dbReference>
<dbReference type="EMBL" id="AF116756">
    <property type="protein sequence ID" value="AAF43488.1"/>
    <property type="status" value="JOINED"/>
    <property type="molecule type" value="Genomic_DNA"/>
</dbReference>
<dbReference type="EMBL" id="AF116759">
    <property type="protein sequence ID" value="AAF43488.1"/>
    <property type="status" value="JOINED"/>
    <property type="molecule type" value="Genomic_DNA"/>
</dbReference>
<dbReference type="EMBL" id="AF116757">
    <property type="protein sequence ID" value="AAF43488.1"/>
    <property type="status" value="JOINED"/>
    <property type="molecule type" value="Genomic_DNA"/>
</dbReference>
<dbReference type="EMBL" id="AF116762">
    <property type="protein sequence ID" value="AAF43488.1"/>
    <property type="status" value="JOINED"/>
    <property type="molecule type" value="Genomic_DNA"/>
</dbReference>
<dbReference type="EMBL" id="AF116764">
    <property type="protein sequence ID" value="AAF43488.1"/>
    <property type="status" value="JOINED"/>
    <property type="molecule type" value="Genomic_DNA"/>
</dbReference>
<dbReference type="EMBL" id="AF116766">
    <property type="protein sequence ID" value="AAF43488.1"/>
    <property type="status" value="JOINED"/>
    <property type="molecule type" value="Genomic_DNA"/>
</dbReference>
<dbReference type="EMBL" id="AF116767">
    <property type="protein sequence ID" value="AAF43488.1"/>
    <property type="status" value="JOINED"/>
    <property type="molecule type" value="Genomic_DNA"/>
</dbReference>
<dbReference type="EMBL" id="AF116765">
    <property type="protein sequence ID" value="AAF43488.1"/>
    <property type="status" value="JOINED"/>
    <property type="molecule type" value="Genomic_DNA"/>
</dbReference>
<dbReference type="EMBL" id="AF116763">
    <property type="protein sequence ID" value="AAF43488.1"/>
    <property type="status" value="JOINED"/>
    <property type="molecule type" value="Genomic_DNA"/>
</dbReference>
<dbReference type="EMBL" id="AF116761">
    <property type="protein sequence ID" value="AAF43488.1"/>
    <property type="status" value="JOINED"/>
    <property type="molecule type" value="Genomic_DNA"/>
</dbReference>
<dbReference type="EMBL" id="AF116760">
    <property type="protein sequence ID" value="AAF43488.1"/>
    <property type="status" value="JOINED"/>
    <property type="molecule type" value="Genomic_DNA"/>
</dbReference>
<dbReference type="EMBL" id="AF116769">
    <property type="protein sequence ID" value="AAF43489.1"/>
    <property type="status" value="ALT_INIT"/>
    <property type="molecule type" value="Genomic_DNA"/>
</dbReference>
<dbReference type="EMBL" id="AF116756">
    <property type="protein sequence ID" value="AAF43489.1"/>
    <property type="status" value="JOINED"/>
    <property type="molecule type" value="Genomic_DNA"/>
</dbReference>
<dbReference type="EMBL" id="AF116757">
    <property type="protein sequence ID" value="AAF43489.1"/>
    <property type="status" value="JOINED"/>
    <property type="molecule type" value="Genomic_DNA"/>
</dbReference>
<dbReference type="EMBL" id="AF116759">
    <property type="protein sequence ID" value="AAF43489.1"/>
    <property type="status" value="JOINED"/>
    <property type="molecule type" value="Genomic_DNA"/>
</dbReference>
<dbReference type="EMBL" id="AF116760">
    <property type="protein sequence ID" value="AAF43489.1"/>
    <property type="status" value="JOINED"/>
    <property type="molecule type" value="Genomic_DNA"/>
</dbReference>
<dbReference type="EMBL" id="AF116761">
    <property type="protein sequence ID" value="AAF43489.1"/>
    <property type="status" value="JOINED"/>
    <property type="molecule type" value="Genomic_DNA"/>
</dbReference>
<dbReference type="EMBL" id="AF116762">
    <property type="protein sequence ID" value="AAF43489.1"/>
    <property type="status" value="JOINED"/>
    <property type="molecule type" value="Genomic_DNA"/>
</dbReference>
<dbReference type="EMBL" id="AF116763">
    <property type="protein sequence ID" value="AAF43489.1"/>
    <property type="status" value="JOINED"/>
    <property type="molecule type" value="Genomic_DNA"/>
</dbReference>
<dbReference type="EMBL" id="AF116764">
    <property type="protein sequence ID" value="AAF43489.1"/>
    <property type="status" value="JOINED"/>
    <property type="molecule type" value="Genomic_DNA"/>
</dbReference>
<dbReference type="EMBL" id="AF116765">
    <property type="protein sequence ID" value="AAF43489.1"/>
    <property type="status" value="JOINED"/>
    <property type="molecule type" value="Genomic_DNA"/>
</dbReference>
<dbReference type="EMBL" id="AF116766">
    <property type="protein sequence ID" value="AAF43489.1"/>
    <property type="status" value="JOINED"/>
    <property type="molecule type" value="Genomic_DNA"/>
</dbReference>
<dbReference type="EMBL" id="AF116770">
    <property type="protein sequence ID" value="AAF43490.1"/>
    <property type="molecule type" value="Genomic_DNA"/>
</dbReference>
<dbReference type="EMBL" id="AF116758">
    <property type="protein sequence ID" value="AAF43490.1"/>
    <property type="status" value="JOINED"/>
    <property type="molecule type" value="Genomic_DNA"/>
</dbReference>
<dbReference type="EMBL" id="AF116760">
    <property type="protein sequence ID" value="AAF43490.1"/>
    <property type="status" value="JOINED"/>
    <property type="molecule type" value="Genomic_DNA"/>
</dbReference>
<dbReference type="EMBL" id="AF116762">
    <property type="protein sequence ID" value="AAF43490.1"/>
    <property type="status" value="JOINED"/>
    <property type="molecule type" value="Genomic_DNA"/>
</dbReference>
<dbReference type="EMBL" id="AF116764">
    <property type="protein sequence ID" value="AAF43490.1"/>
    <property type="status" value="JOINED"/>
    <property type="molecule type" value="Genomic_DNA"/>
</dbReference>
<dbReference type="EMBL" id="AF116765">
    <property type="protein sequence ID" value="AAF43490.1"/>
    <property type="status" value="JOINED"/>
    <property type="molecule type" value="Genomic_DNA"/>
</dbReference>
<dbReference type="EMBL" id="AF116763">
    <property type="protein sequence ID" value="AAF43490.1"/>
    <property type="status" value="JOINED"/>
    <property type="molecule type" value="Genomic_DNA"/>
</dbReference>
<dbReference type="EMBL" id="AF116761">
    <property type="protein sequence ID" value="AAF43490.1"/>
    <property type="status" value="JOINED"/>
    <property type="molecule type" value="Genomic_DNA"/>
</dbReference>
<dbReference type="EMBL" id="AF116759">
    <property type="protein sequence ID" value="AAF43490.1"/>
    <property type="status" value="JOINED"/>
    <property type="molecule type" value="Genomic_DNA"/>
</dbReference>
<dbReference type="EMBL" id="AF116769">
    <property type="protein sequence ID" value="AAF43491.1"/>
    <property type="molecule type" value="Genomic_DNA"/>
</dbReference>
<dbReference type="EMBL" id="AF116758">
    <property type="protein sequence ID" value="AAF43491.1"/>
    <property type="status" value="JOINED"/>
    <property type="molecule type" value="Genomic_DNA"/>
</dbReference>
<dbReference type="EMBL" id="AF116759">
    <property type="protein sequence ID" value="AAF43491.1"/>
    <property type="status" value="JOINED"/>
    <property type="molecule type" value="Genomic_DNA"/>
</dbReference>
<dbReference type="EMBL" id="AF116760">
    <property type="protein sequence ID" value="AAF43491.1"/>
    <property type="status" value="JOINED"/>
    <property type="molecule type" value="Genomic_DNA"/>
</dbReference>
<dbReference type="EMBL" id="AF116764">
    <property type="protein sequence ID" value="AAF43491.1"/>
    <property type="status" value="JOINED"/>
    <property type="molecule type" value="Genomic_DNA"/>
</dbReference>
<dbReference type="EMBL" id="AF116766">
    <property type="protein sequence ID" value="AAF43491.1"/>
    <property type="status" value="JOINED"/>
    <property type="molecule type" value="Genomic_DNA"/>
</dbReference>
<dbReference type="EMBL" id="AF116768">
    <property type="protein sequence ID" value="AAF43491.1"/>
    <property type="status" value="JOINED"/>
    <property type="molecule type" value="Genomic_DNA"/>
</dbReference>
<dbReference type="EMBL" id="AF116767">
    <property type="protein sequence ID" value="AAF43491.1"/>
    <property type="status" value="JOINED"/>
    <property type="molecule type" value="Genomic_DNA"/>
</dbReference>
<dbReference type="EMBL" id="AF116765">
    <property type="protein sequence ID" value="AAF43491.1"/>
    <property type="status" value="JOINED"/>
    <property type="molecule type" value="Genomic_DNA"/>
</dbReference>
<dbReference type="EMBL" id="AF116763">
    <property type="protein sequence ID" value="AAF43491.1"/>
    <property type="status" value="JOINED"/>
    <property type="molecule type" value="Genomic_DNA"/>
</dbReference>
<dbReference type="EMBL" id="AF116762">
    <property type="protein sequence ID" value="AAF43491.1"/>
    <property type="status" value="JOINED"/>
    <property type="molecule type" value="Genomic_DNA"/>
</dbReference>
<dbReference type="EMBL" id="AF116761">
    <property type="protein sequence ID" value="AAF43491.1"/>
    <property type="status" value="JOINED"/>
    <property type="molecule type" value="Genomic_DNA"/>
</dbReference>
<dbReference type="EMBL" id="AF116769">
    <property type="protein sequence ID" value="AAF43492.1"/>
    <property type="molecule type" value="Genomic_DNA"/>
</dbReference>
<dbReference type="EMBL" id="AF116758">
    <property type="protein sequence ID" value="AAF43492.1"/>
    <property type="status" value="JOINED"/>
    <property type="molecule type" value="Genomic_DNA"/>
</dbReference>
<dbReference type="EMBL" id="AF116760">
    <property type="protein sequence ID" value="AAF43492.1"/>
    <property type="status" value="JOINED"/>
    <property type="molecule type" value="Genomic_DNA"/>
</dbReference>
<dbReference type="EMBL" id="AF116759">
    <property type="protein sequence ID" value="AAF43492.1"/>
    <property type="status" value="JOINED"/>
    <property type="molecule type" value="Genomic_DNA"/>
</dbReference>
<dbReference type="EMBL" id="AF116761">
    <property type="protein sequence ID" value="AAF43492.1"/>
    <property type="status" value="JOINED"/>
    <property type="molecule type" value="Genomic_DNA"/>
</dbReference>
<dbReference type="EMBL" id="AF116763">
    <property type="protein sequence ID" value="AAF43492.1"/>
    <property type="status" value="JOINED"/>
    <property type="molecule type" value="Genomic_DNA"/>
</dbReference>
<dbReference type="EMBL" id="AF116765">
    <property type="protein sequence ID" value="AAF43492.1"/>
    <property type="status" value="JOINED"/>
    <property type="molecule type" value="Genomic_DNA"/>
</dbReference>
<dbReference type="EMBL" id="AF116767">
    <property type="protein sequence ID" value="AAF43492.1"/>
    <property type="status" value="JOINED"/>
    <property type="molecule type" value="Genomic_DNA"/>
</dbReference>
<dbReference type="EMBL" id="AF116766">
    <property type="protein sequence ID" value="AAF43492.1"/>
    <property type="status" value="JOINED"/>
    <property type="molecule type" value="Genomic_DNA"/>
</dbReference>
<dbReference type="EMBL" id="AF116764">
    <property type="protein sequence ID" value="AAF43492.1"/>
    <property type="status" value="JOINED"/>
    <property type="molecule type" value="Genomic_DNA"/>
</dbReference>
<dbReference type="EMBL" id="AF116762">
    <property type="protein sequence ID" value="AAF43492.1"/>
    <property type="status" value="JOINED"/>
    <property type="molecule type" value="Genomic_DNA"/>
</dbReference>
<dbReference type="EMBL" id="AF116769">
    <property type="protein sequence ID" value="AAF43493.1"/>
    <property type="molecule type" value="Genomic_DNA"/>
</dbReference>
<dbReference type="EMBL" id="AF116758">
    <property type="protein sequence ID" value="AAF43493.1"/>
    <property type="status" value="JOINED"/>
    <property type="molecule type" value="Genomic_DNA"/>
</dbReference>
<dbReference type="EMBL" id="AF116760">
    <property type="protein sequence ID" value="AAF43493.1"/>
    <property type="status" value="JOINED"/>
    <property type="molecule type" value="Genomic_DNA"/>
</dbReference>
<dbReference type="EMBL" id="AF116759">
    <property type="protein sequence ID" value="AAF43493.1"/>
    <property type="status" value="JOINED"/>
    <property type="molecule type" value="Genomic_DNA"/>
</dbReference>
<dbReference type="EMBL" id="AF116761">
    <property type="protein sequence ID" value="AAF43493.1"/>
    <property type="status" value="JOINED"/>
    <property type="molecule type" value="Genomic_DNA"/>
</dbReference>
<dbReference type="EMBL" id="AF116763">
    <property type="protein sequence ID" value="AAF43493.1"/>
    <property type="status" value="JOINED"/>
    <property type="molecule type" value="Genomic_DNA"/>
</dbReference>
<dbReference type="EMBL" id="AF116765">
    <property type="protein sequence ID" value="AAF43493.1"/>
    <property type="status" value="JOINED"/>
    <property type="molecule type" value="Genomic_DNA"/>
</dbReference>
<dbReference type="EMBL" id="AF116766">
    <property type="protein sequence ID" value="AAF43493.1"/>
    <property type="status" value="JOINED"/>
    <property type="molecule type" value="Genomic_DNA"/>
</dbReference>
<dbReference type="EMBL" id="AF116764">
    <property type="protein sequence ID" value="AAF43493.1"/>
    <property type="status" value="JOINED"/>
    <property type="molecule type" value="Genomic_DNA"/>
</dbReference>
<dbReference type="EMBL" id="AF116762">
    <property type="protein sequence ID" value="AAF43493.1"/>
    <property type="status" value="JOINED"/>
    <property type="molecule type" value="Genomic_DNA"/>
</dbReference>
<dbReference type="EMBL" id="AF116771">
    <property type="protein sequence ID" value="AAF61624.1"/>
    <property type="status" value="ALT_FRAME"/>
    <property type="molecule type" value="mRNA"/>
</dbReference>
<dbReference type="EMBL" id="AB042841">
    <property type="protein sequence ID" value="BAB20591.1"/>
    <property type="molecule type" value="mRNA"/>
</dbReference>
<dbReference type="EMBL" id="BC039815">
    <property type="protein sequence ID" value="AAH39815.1"/>
    <property type="molecule type" value="mRNA"/>
</dbReference>
<dbReference type="EMBL" id="AF061512">
    <property type="protein sequence ID" value="AAC24830.1"/>
    <property type="molecule type" value="mRNA"/>
</dbReference>
<dbReference type="EMBL" id="AY342152">
    <property type="protein sequence ID" value="AAQ63448.1"/>
    <property type="molecule type" value="Genomic_DNA"/>
</dbReference>
<dbReference type="EMBL" id="AY341145">
    <property type="protein sequence ID" value="AAQ63448.1"/>
    <property type="status" value="JOINED"/>
    <property type="molecule type" value="Genomic_DNA"/>
</dbReference>
<dbReference type="EMBL" id="AY339663">
    <property type="protein sequence ID" value="AAQ63449.1"/>
    <property type="molecule type" value="Genomic_DNA"/>
</dbReference>
<dbReference type="EMBL" id="AY341143">
    <property type="protein sequence ID" value="AAQ63450.1"/>
    <property type="molecule type" value="Genomic_DNA"/>
</dbReference>
<dbReference type="EMBL" id="AY339664">
    <property type="protein sequence ID" value="AAQ63450.1"/>
    <property type="status" value="JOINED"/>
    <property type="molecule type" value="Genomic_DNA"/>
</dbReference>
<dbReference type="EMBL" id="AY341142">
    <property type="protein sequence ID" value="AAQ63450.1"/>
    <property type="status" value="JOINED"/>
    <property type="molecule type" value="Genomic_DNA"/>
</dbReference>
<dbReference type="EMBL" id="AY341143">
    <property type="protein sequence ID" value="AAQ63451.1"/>
    <property type="molecule type" value="Genomic_DNA"/>
</dbReference>
<dbReference type="EMBL" id="AY341142">
    <property type="protein sequence ID" value="AAQ63451.1"/>
    <property type="status" value="JOINED"/>
    <property type="molecule type" value="Genomic_DNA"/>
</dbReference>
<dbReference type="EMBL" id="AY341144">
    <property type="protein sequence ID" value="AAQ63452.1"/>
    <property type="molecule type" value="Genomic_DNA"/>
</dbReference>
<dbReference type="EMBL" id="AY342153">
    <property type="protein sequence ID" value="AAQ63453.1"/>
    <property type="molecule type" value="Genomic_DNA"/>
</dbReference>
<dbReference type="EMBL" id="AY342154">
    <property type="protein sequence ID" value="AAQ63454.1"/>
    <property type="molecule type" value="Genomic_DNA"/>
</dbReference>
<dbReference type="EMBL" id="AJ315499">
    <property type="protein sequence ID" value="CAC48053.1"/>
    <property type="molecule type" value="mRNA"/>
</dbReference>
<dbReference type="CCDS" id="CCDS3293.1">
    <molecule id="Q9H3D4-1"/>
</dbReference>
<dbReference type="CCDS" id="CCDS46976.1">
    <molecule id="Q9H3D4-3"/>
</dbReference>
<dbReference type="CCDS" id="CCDS46977.1">
    <molecule id="Q9H3D4-5"/>
</dbReference>
<dbReference type="CCDS" id="CCDS46978.1">
    <molecule id="Q9H3D4-2"/>
</dbReference>
<dbReference type="CCDS" id="CCDS46979.1">
    <molecule id="Q9H3D4-4"/>
</dbReference>
<dbReference type="CCDS" id="CCDS46980.1">
    <molecule id="Q9H3D4-6"/>
</dbReference>
<dbReference type="CCDS" id="CCDS82887.1">
    <molecule id="Q9H3D4-11"/>
</dbReference>
<dbReference type="CCDS" id="CCDS87179.1">
    <molecule id="Q9H3D4-7"/>
</dbReference>
<dbReference type="CCDS" id="CCDS87180.1">
    <molecule id="Q9H3D4-8"/>
</dbReference>
<dbReference type="CCDS" id="CCDS87181.1">
    <molecule id="Q9H3D4-10"/>
</dbReference>
<dbReference type="RefSeq" id="NP_001108450.1">
    <molecule id="Q9H3D4-3"/>
    <property type="nucleotide sequence ID" value="NM_001114978.2"/>
</dbReference>
<dbReference type="RefSeq" id="NP_001108451.1">
    <molecule id="Q9H3D4-5"/>
    <property type="nucleotide sequence ID" value="NM_001114979.2"/>
</dbReference>
<dbReference type="RefSeq" id="NP_001108452.1">
    <molecule id="Q9H3D4-2"/>
    <property type="nucleotide sequence ID" value="NM_001114980.2"/>
</dbReference>
<dbReference type="RefSeq" id="NP_001108453.1">
    <molecule id="Q9H3D4-4"/>
    <property type="nucleotide sequence ID" value="NM_001114981.2"/>
</dbReference>
<dbReference type="RefSeq" id="NP_001108454.1">
    <molecule id="Q9H3D4-6"/>
    <property type="nucleotide sequence ID" value="NM_001114982.2"/>
</dbReference>
<dbReference type="RefSeq" id="NP_001316073.1">
    <molecule id="Q9H3D4-7"/>
    <property type="nucleotide sequence ID" value="NM_001329144.2"/>
</dbReference>
<dbReference type="RefSeq" id="NP_001316074.1">
    <molecule id="Q9H3D4-8"/>
    <property type="nucleotide sequence ID" value="NM_001329145.2"/>
</dbReference>
<dbReference type="RefSeq" id="NP_001316075.1">
    <molecule id="Q9H3D4-10"/>
    <property type="nucleotide sequence ID" value="NM_001329146.2"/>
</dbReference>
<dbReference type="RefSeq" id="NP_001316077.1">
    <molecule id="Q9H3D4-11"/>
    <property type="nucleotide sequence ID" value="NM_001329148.2"/>
</dbReference>
<dbReference type="RefSeq" id="NP_003713.3">
    <molecule id="Q9H3D4-1"/>
    <property type="nucleotide sequence ID" value="NM_003722.4"/>
</dbReference>
<dbReference type="RefSeq" id="XP_016862876.1">
    <property type="nucleotide sequence ID" value="XM_017007387.1"/>
</dbReference>
<dbReference type="PDB" id="1RG6">
    <property type="method" value="NMR"/>
    <property type="chains" value="A=540-614"/>
</dbReference>
<dbReference type="PDB" id="2NB1">
    <property type="method" value="NMR"/>
    <property type="chains" value="A/C=397-455"/>
</dbReference>
<dbReference type="PDB" id="2RMN">
    <property type="method" value="NMR"/>
    <property type="chains" value="A=153-388"/>
</dbReference>
<dbReference type="PDB" id="2Y9T">
    <property type="method" value="NMR"/>
    <property type="chains" value="A=543-622"/>
</dbReference>
<dbReference type="PDB" id="2Y9U">
    <property type="method" value="X-ray"/>
    <property type="resolution" value="1.60 A"/>
    <property type="chains" value="A=545-611"/>
</dbReference>
<dbReference type="PDB" id="3QYM">
    <property type="method" value="X-ray"/>
    <property type="resolution" value="3.20 A"/>
    <property type="chains" value="A/B/C/D/E/F/G/H=166-362"/>
</dbReference>
<dbReference type="PDB" id="3QYN">
    <property type="method" value="X-ray"/>
    <property type="resolution" value="2.50 A"/>
    <property type="chains" value="A/B/C/D=166-362"/>
</dbReference>
<dbReference type="PDB" id="3US0">
    <property type="method" value="X-ray"/>
    <property type="resolution" value="2.50 A"/>
    <property type="chains" value="A/B/C/D=166-362"/>
</dbReference>
<dbReference type="PDB" id="3US1">
    <property type="method" value="X-ray"/>
    <property type="resolution" value="2.80 A"/>
    <property type="chains" value="A/D=166-362"/>
</dbReference>
<dbReference type="PDB" id="3US2">
    <property type="method" value="X-ray"/>
    <property type="resolution" value="4.20 A"/>
    <property type="chains" value="A/B/C/D/G/H/I/J=166-362"/>
</dbReference>
<dbReference type="PDB" id="3ZY0">
    <property type="method" value="X-ray"/>
    <property type="resolution" value="1.90 A"/>
    <property type="chains" value="A/B/C/D=398-427"/>
</dbReference>
<dbReference type="PDB" id="3ZY1">
    <property type="method" value="X-ray"/>
    <property type="resolution" value="2.15 A"/>
    <property type="chains" value="A=398-441"/>
</dbReference>
<dbReference type="PDB" id="4A9Z">
    <property type="method" value="X-ray"/>
    <property type="resolution" value="2.29 A"/>
    <property type="chains" value="A/B/C/D=397-455"/>
</dbReference>
<dbReference type="PDB" id="6FGN">
    <property type="method" value="NMR"/>
    <property type="chains" value="A=47-73"/>
</dbReference>
<dbReference type="PDB" id="6RU6">
    <property type="method" value="X-ray"/>
    <property type="resolution" value="2.05 A"/>
    <property type="chains" value="C=618-630"/>
</dbReference>
<dbReference type="PDB" id="6RU7">
    <property type="method" value="X-ray"/>
    <property type="resolution" value="2.08 A"/>
    <property type="chains" value="C/D=618-633"/>
</dbReference>
<dbReference type="PDB" id="6RU8">
    <property type="method" value="X-ray"/>
    <property type="resolution" value="1.92 A"/>
    <property type="chains" value="E/F/G/H=621-632"/>
</dbReference>
<dbReference type="PDB" id="7Z71">
    <property type="method" value="X-ray"/>
    <property type="resolution" value="1.85 A"/>
    <property type="chains" value="A/C=162-363"/>
</dbReference>
<dbReference type="PDB" id="7Z72">
    <property type="method" value="X-ray"/>
    <property type="resolution" value="1.80 A"/>
    <property type="chains" value="A=545-611"/>
</dbReference>
<dbReference type="PDB" id="7Z73">
    <property type="method" value="X-ray"/>
    <property type="resolution" value="2.27 A"/>
    <property type="chains" value="A/B/C/D=397-455"/>
</dbReference>
<dbReference type="PDB" id="7Z7E">
    <property type="method" value="X-ray"/>
    <property type="resolution" value="1.80 A"/>
    <property type="chains" value="A=162-363"/>
</dbReference>
<dbReference type="PDB" id="8P9C">
    <property type="method" value="X-ray"/>
    <property type="resolution" value="1.76 A"/>
    <property type="chains" value="A=397-455"/>
</dbReference>
<dbReference type="PDB" id="8P9D">
    <property type="method" value="X-ray"/>
    <property type="resolution" value="2.70 A"/>
    <property type="chains" value="A/C=397-455"/>
</dbReference>
<dbReference type="PDB" id="8P9E">
    <property type="method" value="X-ray"/>
    <property type="resolution" value="2.25 A"/>
    <property type="chains" value="A=397-455"/>
</dbReference>
<dbReference type="PDB" id="9GFO">
    <property type="method" value="X-ray"/>
    <property type="resolution" value="2.40 A"/>
    <property type="chains" value="AAA/BBB/CCC/DDD=373-381"/>
</dbReference>
<dbReference type="PDBsum" id="1RG6"/>
<dbReference type="PDBsum" id="2NB1"/>
<dbReference type="PDBsum" id="2RMN"/>
<dbReference type="PDBsum" id="2Y9T"/>
<dbReference type="PDBsum" id="2Y9U"/>
<dbReference type="PDBsum" id="3QYM"/>
<dbReference type="PDBsum" id="3QYN"/>
<dbReference type="PDBsum" id="3US0"/>
<dbReference type="PDBsum" id="3US1"/>
<dbReference type="PDBsum" id="3US2"/>
<dbReference type="PDBsum" id="3ZY0"/>
<dbReference type="PDBsum" id="3ZY1"/>
<dbReference type="PDBsum" id="4A9Z"/>
<dbReference type="PDBsum" id="6FGN"/>
<dbReference type="PDBsum" id="6RU6"/>
<dbReference type="PDBsum" id="6RU7"/>
<dbReference type="PDBsum" id="6RU8"/>
<dbReference type="PDBsum" id="7Z71"/>
<dbReference type="PDBsum" id="7Z72"/>
<dbReference type="PDBsum" id="7Z73"/>
<dbReference type="PDBsum" id="7Z7E"/>
<dbReference type="PDBsum" id="8P9C"/>
<dbReference type="PDBsum" id="8P9D"/>
<dbReference type="PDBsum" id="8P9E"/>
<dbReference type="PDBsum" id="9GFO"/>
<dbReference type="BMRB" id="Q9H3D4"/>
<dbReference type="SMR" id="Q9H3D4"/>
<dbReference type="BioGRID" id="114181">
    <property type="interactions" value="301"/>
</dbReference>
<dbReference type="DIP" id="DIP-29588N"/>
<dbReference type="ELM" id="Q9H3D4"/>
<dbReference type="FunCoup" id="Q9H3D4">
    <property type="interactions" value="1658"/>
</dbReference>
<dbReference type="IntAct" id="Q9H3D4">
    <property type="interactions" value="94"/>
</dbReference>
<dbReference type="MINT" id="Q9H3D4"/>
<dbReference type="STRING" id="9606.ENSP00000264731"/>
<dbReference type="GlyGen" id="Q9H3D4">
    <property type="glycosylation" value="1 site"/>
</dbReference>
<dbReference type="iPTMnet" id="Q9H3D4"/>
<dbReference type="PhosphoSitePlus" id="Q9H3D4"/>
<dbReference type="BioMuta" id="TP63"/>
<dbReference type="DMDM" id="57013009"/>
<dbReference type="jPOST" id="Q9H3D4"/>
<dbReference type="MassIVE" id="Q9H3D4"/>
<dbReference type="PaxDb" id="9606-ENSP00000264731"/>
<dbReference type="PeptideAtlas" id="Q9H3D4"/>
<dbReference type="ProteomicsDB" id="80692">
    <molecule id="Q9H3D4-1"/>
</dbReference>
<dbReference type="ProteomicsDB" id="80693">
    <molecule id="Q9H3D4-10"/>
</dbReference>
<dbReference type="ProteomicsDB" id="80694">
    <molecule id="Q9H3D4-11"/>
</dbReference>
<dbReference type="ProteomicsDB" id="80695">
    <molecule id="Q9H3D4-12"/>
</dbReference>
<dbReference type="ProteomicsDB" id="80696">
    <molecule id="Q9H3D4-2"/>
</dbReference>
<dbReference type="ProteomicsDB" id="80697">
    <molecule id="Q9H3D4-3"/>
</dbReference>
<dbReference type="ProteomicsDB" id="80698">
    <molecule id="Q9H3D4-4"/>
</dbReference>
<dbReference type="ProteomicsDB" id="80699">
    <molecule id="Q9H3D4-5"/>
</dbReference>
<dbReference type="ProteomicsDB" id="80700">
    <molecule id="Q9H3D4-6"/>
</dbReference>
<dbReference type="ProteomicsDB" id="80701">
    <molecule id="Q9H3D4-7"/>
</dbReference>
<dbReference type="ProteomicsDB" id="80702">
    <molecule id="Q9H3D4-8"/>
</dbReference>
<dbReference type="ProteomicsDB" id="80703">
    <molecule id="Q9H3D4-9"/>
</dbReference>
<dbReference type="Antibodypedia" id="1750">
    <property type="antibodies" value="1080 antibodies from 50 providers"/>
</dbReference>
<dbReference type="DNASU" id="8626"/>
<dbReference type="Ensembl" id="ENST00000264731.8">
    <molecule id="Q9H3D4-1"/>
    <property type="protein sequence ID" value="ENSP00000264731.3"/>
    <property type="gene ID" value="ENSG00000073282.14"/>
</dbReference>
<dbReference type="Ensembl" id="ENST00000320472.9">
    <molecule id="Q9H3D4-7"/>
    <property type="protein sequence ID" value="ENSP00000317510.5"/>
    <property type="gene ID" value="ENSG00000073282.14"/>
</dbReference>
<dbReference type="Ensembl" id="ENST00000354600.10">
    <molecule id="Q9H3D4-2"/>
    <property type="protein sequence ID" value="ENSP00000346614.5"/>
    <property type="gene ID" value="ENSG00000073282.14"/>
</dbReference>
<dbReference type="Ensembl" id="ENST00000392460.7">
    <molecule id="Q9H3D4-3"/>
    <property type="protein sequence ID" value="ENSP00000376253.3"/>
    <property type="gene ID" value="ENSG00000073282.14"/>
</dbReference>
<dbReference type="Ensembl" id="ENST00000392461.7">
    <molecule id="Q9H3D4-8"/>
    <property type="protein sequence ID" value="ENSP00000376254.3"/>
    <property type="gene ID" value="ENSG00000073282.14"/>
</dbReference>
<dbReference type="Ensembl" id="ENST00000392463.6">
    <molecule id="Q9H3D4-4"/>
    <property type="protein sequence ID" value="ENSP00000376256.2"/>
    <property type="gene ID" value="ENSG00000073282.14"/>
</dbReference>
<dbReference type="Ensembl" id="ENST00000418709.6">
    <molecule id="Q9H3D4-5"/>
    <property type="protein sequence ID" value="ENSP00000407144.2"/>
    <property type="gene ID" value="ENSG00000073282.14"/>
</dbReference>
<dbReference type="Ensembl" id="ENST00000437221.5">
    <molecule id="Q9H3D4-6"/>
    <property type="protein sequence ID" value="ENSP00000392488.1"/>
    <property type="gene ID" value="ENSG00000073282.14"/>
</dbReference>
<dbReference type="Ensembl" id="ENST00000440651.6">
    <molecule id="Q9H3D4-11"/>
    <property type="protein sequence ID" value="ENSP00000394337.2"/>
    <property type="gene ID" value="ENSG00000073282.14"/>
</dbReference>
<dbReference type="Ensembl" id="ENST00000449992.5">
    <molecule id="Q9H3D4-10"/>
    <property type="protein sequence ID" value="ENSP00000387839.1"/>
    <property type="gene ID" value="ENSG00000073282.14"/>
</dbReference>
<dbReference type="Ensembl" id="ENST00000456148.1">
    <molecule id="Q9H3D4-12"/>
    <property type="protein sequence ID" value="ENSP00000389485.1"/>
    <property type="gene ID" value="ENSG00000073282.14"/>
</dbReference>
<dbReference type="GeneID" id="8626"/>
<dbReference type="KEGG" id="hsa:8626"/>
<dbReference type="MANE-Select" id="ENST00000264731.8">
    <property type="protein sequence ID" value="ENSP00000264731.3"/>
    <property type="RefSeq nucleotide sequence ID" value="NM_003722.5"/>
    <property type="RefSeq protein sequence ID" value="NP_003713.3"/>
</dbReference>
<dbReference type="UCSC" id="uc003frx.3">
    <molecule id="Q9H3D4-1"/>
    <property type="organism name" value="human"/>
</dbReference>
<dbReference type="AGR" id="HGNC:15979"/>
<dbReference type="CTD" id="8626"/>
<dbReference type="DisGeNET" id="8626"/>
<dbReference type="GeneCards" id="TP63"/>
<dbReference type="GeneReviews" id="TP63"/>
<dbReference type="HGNC" id="HGNC:15979">
    <property type="gene designation" value="TP63"/>
</dbReference>
<dbReference type="HPA" id="ENSG00000073282">
    <property type="expression patterns" value="Tissue enhanced (esophagus, skin)"/>
</dbReference>
<dbReference type="MalaCards" id="TP63"/>
<dbReference type="MIM" id="103285">
    <property type="type" value="phenotype"/>
</dbReference>
<dbReference type="MIM" id="106260">
    <property type="type" value="phenotype"/>
</dbReference>
<dbReference type="MIM" id="129400">
    <property type="type" value="phenotype"/>
</dbReference>
<dbReference type="MIM" id="603273">
    <property type="type" value="gene"/>
</dbReference>
<dbReference type="MIM" id="603543">
    <property type="type" value="phenotype"/>
</dbReference>
<dbReference type="MIM" id="604292">
    <property type="type" value="phenotype"/>
</dbReference>
<dbReference type="MIM" id="605289">
    <property type="type" value="phenotype"/>
</dbReference>
<dbReference type="MIM" id="618149">
    <property type="type" value="phenotype"/>
</dbReference>
<dbReference type="MIM" id="620311">
    <property type="type" value="phenotype"/>
</dbReference>
<dbReference type="neXtProt" id="NX_Q9H3D4"/>
<dbReference type="OpenTargets" id="ENSG00000073282"/>
<dbReference type="Orphanet" id="978">
    <property type="disease" value="ADULT syndrome"/>
</dbReference>
<dbReference type="Orphanet" id="1072">
    <property type="disease" value="Ankyloblepharon filiforme adnatum-cleft palate syndrome"/>
</dbReference>
<dbReference type="Orphanet" id="93930">
    <property type="disease" value="Bladder exstrophy"/>
</dbReference>
<dbReference type="Orphanet" id="141291">
    <property type="disease" value="Cleft lip and alveolus"/>
</dbReference>
<dbReference type="Orphanet" id="199306">
    <property type="disease" value="Cleft lip/palate"/>
</dbReference>
<dbReference type="Orphanet" id="1896">
    <property type="disease" value="EEC syndrome"/>
</dbReference>
<dbReference type="Orphanet" id="199302">
    <property type="disease" value="Isolated cleft lip"/>
</dbReference>
<dbReference type="Orphanet" id="2440">
    <property type="disease" value="Isolated split hand-split foot malformation"/>
</dbReference>
<dbReference type="Orphanet" id="69085">
    <property type="disease" value="Limb-mammary syndrome"/>
</dbReference>
<dbReference type="PharmGKB" id="PA162406776"/>
<dbReference type="VEuPathDB" id="HostDB:ENSG00000073282"/>
<dbReference type="eggNOG" id="ENOG502QQ48">
    <property type="taxonomic scope" value="Eukaryota"/>
</dbReference>
<dbReference type="GeneTree" id="ENSGT00950000183153"/>
<dbReference type="HOGENOM" id="CLU_019621_1_0_1"/>
<dbReference type="InParanoid" id="Q9H3D4"/>
<dbReference type="OMA" id="DFFSQDV"/>
<dbReference type="OrthoDB" id="5915660at2759"/>
<dbReference type="PAN-GO" id="Q9H3D4">
    <property type="GO annotations" value="3 GO annotations based on evolutionary models"/>
</dbReference>
<dbReference type="PhylomeDB" id="Q9H3D4"/>
<dbReference type="TreeFam" id="TF106101"/>
<dbReference type="PathwayCommons" id="Q9H3D4"/>
<dbReference type="Reactome" id="R-HSA-139915">
    <property type="pathway name" value="Activation of PUMA and translocation to mitochondria"/>
</dbReference>
<dbReference type="Reactome" id="R-HSA-5620971">
    <property type="pathway name" value="Pyroptosis"/>
</dbReference>
<dbReference type="Reactome" id="R-HSA-5628897">
    <property type="pathway name" value="TP53 Regulates Metabolic Genes"/>
</dbReference>
<dbReference type="Reactome" id="R-HSA-6803204">
    <property type="pathway name" value="TP53 Regulates Transcription of Genes Involved in Cytochrome C Release"/>
</dbReference>
<dbReference type="Reactome" id="R-HSA-6803205">
    <property type="pathway name" value="TP53 regulates transcription of several additional cell death genes whose specific roles in p53-dependent apoptosis remain uncertain"/>
</dbReference>
<dbReference type="Reactome" id="R-HSA-6803207">
    <property type="pathway name" value="TP53 Regulates Transcription of Caspase Activators and Caspases"/>
</dbReference>
<dbReference type="Reactome" id="R-HSA-6803211">
    <property type="pathway name" value="TP53 Regulates Transcription of Death Receptors and Ligands"/>
</dbReference>
<dbReference type="Reactome" id="R-HSA-6804759">
    <property type="pathway name" value="Regulation of TP53 Activity through Association with Co-factors"/>
</dbReference>
<dbReference type="Reactome" id="R-HSA-9725554">
    <property type="pathway name" value="Differentiation of Keratinocytes in Interfollicular Epidermis in Mammalian Skin"/>
</dbReference>
<dbReference type="SignaLink" id="Q9H3D4"/>
<dbReference type="SIGNOR" id="Q9H3D4"/>
<dbReference type="BioGRID-ORCS" id="8626">
    <property type="hits" value="53 hits in 1184 CRISPR screens"/>
</dbReference>
<dbReference type="ChiTaRS" id="TP63">
    <property type="organism name" value="human"/>
</dbReference>
<dbReference type="EvolutionaryTrace" id="Q9H3D4"/>
<dbReference type="GeneWiki" id="TP63"/>
<dbReference type="GenomeRNAi" id="8626"/>
<dbReference type="Pharos" id="Q9H3D4">
    <property type="development level" value="Tbio"/>
</dbReference>
<dbReference type="PRO" id="PR:Q9H3D4"/>
<dbReference type="Proteomes" id="UP000005640">
    <property type="component" value="Chromosome 3"/>
</dbReference>
<dbReference type="RNAct" id="Q9H3D4">
    <property type="molecule type" value="protein"/>
</dbReference>
<dbReference type="Bgee" id="ENSG00000073282">
    <property type="expression patterns" value="Expressed in upper leg skin and 151 other cell types or tissues"/>
</dbReference>
<dbReference type="ExpressionAtlas" id="Q9H3D4">
    <property type="expression patterns" value="baseline and differential"/>
</dbReference>
<dbReference type="GO" id="GO:0000785">
    <property type="term" value="C:chromatin"/>
    <property type="evidence" value="ECO:0000314"/>
    <property type="project" value="BHF-UCL"/>
</dbReference>
<dbReference type="GO" id="GO:0005737">
    <property type="term" value="C:cytoplasm"/>
    <property type="evidence" value="ECO:0000314"/>
    <property type="project" value="MGI"/>
</dbReference>
<dbReference type="GO" id="GO:0030425">
    <property type="term" value="C:dendrite"/>
    <property type="evidence" value="ECO:0007669"/>
    <property type="project" value="Ensembl"/>
</dbReference>
<dbReference type="GO" id="GO:0005654">
    <property type="term" value="C:nucleoplasm"/>
    <property type="evidence" value="ECO:0000314"/>
    <property type="project" value="HPA"/>
</dbReference>
<dbReference type="GO" id="GO:0005634">
    <property type="term" value="C:nucleus"/>
    <property type="evidence" value="ECO:0000314"/>
    <property type="project" value="UniProtKB"/>
</dbReference>
<dbReference type="GO" id="GO:0032991">
    <property type="term" value="C:protein-containing complex"/>
    <property type="evidence" value="ECO:0007669"/>
    <property type="project" value="Ensembl"/>
</dbReference>
<dbReference type="GO" id="GO:0003682">
    <property type="term" value="F:chromatin binding"/>
    <property type="evidence" value="ECO:0000314"/>
    <property type="project" value="UniProtKB"/>
</dbReference>
<dbReference type="GO" id="GO:0003684">
    <property type="term" value="F:damaged DNA binding"/>
    <property type="evidence" value="ECO:0007669"/>
    <property type="project" value="Ensembl"/>
</dbReference>
<dbReference type="GO" id="GO:0003677">
    <property type="term" value="F:DNA binding"/>
    <property type="evidence" value="ECO:0000303"/>
    <property type="project" value="UniProtKB"/>
</dbReference>
<dbReference type="GO" id="GO:0001228">
    <property type="term" value="F:DNA-binding transcription activator activity, RNA polymerase II-specific"/>
    <property type="evidence" value="ECO:0007669"/>
    <property type="project" value="Ensembl"/>
</dbReference>
<dbReference type="GO" id="GO:0003700">
    <property type="term" value="F:DNA-binding transcription factor activity"/>
    <property type="evidence" value="ECO:0000315"/>
    <property type="project" value="CAFA"/>
</dbReference>
<dbReference type="GO" id="GO:0000981">
    <property type="term" value="F:DNA-binding transcription factor activity, RNA polymerase II-specific"/>
    <property type="evidence" value="ECO:0000247"/>
    <property type="project" value="NTNU_SB"/>
</dbReference>
<dbReference type="GO" id="GO:0042802">
    <property type="term" value="F:identical protein binding"/>
    <property type="evidence" value="ECO:0000353"/>
    <property type="project" value="UniProtKB"/>
</dbReference>
<dbReference type="GO" id="GO:0097371">
    <property type="term" value="F:MDM2/MDM4 family protein binding"/>
    <property type="evidence" value="ECO:0000353"/>
    <property type="project" value="CAFA"/>
</dbReference>
<dbReference type="GO" id="GO:0046872">
    <property type="term" value="F:metal ion binding"/>
    <property type="evidence" value="ECO:0007669"/>
    <property type="project" value="UniProtKB-KW"/>
</dbReference>
<dbReference type="GO" id="GO:0002039">
    <property type="term" value="F:p53 binding"/>
    <property type="evidence" value="ECO:0000353"/>
    <property type="project" value="CAFA"/>
</dbReference>
<dbReference type="GO" id="GO:1990841">
    <property type="term" value="F:promoter-specific chromatin binding"/>
    <property type="evidence" value="ECO:0007669"/>
    <property type="project" value="Ensembl"/>
</dbReference>
<dbReference type="GO" id="GO:0000978">
    <property type="term" value="F:RNA polymerase II cis-regulatory region sequence-specific DNA binding"/>
    <property type="evidence" value="ECO:0000318"/>
    <property type="project" value="GO_Central"/>
</dbReference>
<dbReference type="GO" id="GO:0000977">
    <property type="term" value="F:RNA polymerase II transcription regulatory region sequence-specific DNA binding"/>
    <property type="evidence" value="ECO:0000314"/>
    <property type="project" value="GO_Central"/>
</dbReference>
<dbReference type="GO" id="GO:0050699">
    <property type="term" value="F:WW domain binding"/>
    <property type="evidence" value="ECO:0000353"/>
    <property type="project" value="UniProtKB"/>
</dbReference>
<dbReference type="GO" id="GO:0006915">
    <property type="term" value="P:apoptotic process"/>
    <property type="evidence" value="ECO:0000304"/>
    <property type="project" value="ProtInc"/>
</dbReference>
<dbReference type="GO" id="GO:0090398">
    <property type="term" value="P:cellular senescence"/>
    <property type="evidence" value="ECO:0007669"/>
    <property type="project" value="Ensembl"/>
</dbReference>
<dbReference type="GO" id="GO:0006338">
    <property type="term" value="P:chromatin remodeling"/>
    <property type="evidence" value="ECO:0007669"/>
    <property type="project" value="Ensembl"/>
</dbReference>
<dbReference type="GO" id="GO:0060197">
    <property type="term" value="P:cloacal septation"/>
    <property type="evidence" value="ECO:0007669"/>
    <property type="project" value="Ensembl"/>
</dbReference>
<dbReference type="GO" id="GO:1904888">
    <property type="term" value="P:cranial skeletal system development"/>
    <property type="evidence" value="ECO:0007669"/>
    <property type="project" value="Ensembl"/>
</dbReference>
<dbReference type="GO" id="GO:0008340">
    <property type="term" value="P:determination of adult lifespan"/>
    <property type="evidence" value="ECO:0007669"/>
    <property type="project" value="Ensembl"/>
</dbReference>
<dbReference type="GO" id="GO:0006974">
    <property type="term" value="P:DNA damage response"/>
    <property type="evidence" value="ECO:0000314"/>
    <property type="project" value="UniProtKB"/>
</dbReference>
<dbReference type="GO" id="GO:0007499">
    <property type="term" value="P:ectoderm and mesoderm interaction"/>
    <property type="evidence" value="ECO:0007669"/>
    <property type="project" value="Ensembl"/>
</dbReference>
<dbReference type="GO" id="GO:0035115">
    <property type="term" value="P:embryonic forelimb morphogenesis"/>
    <property type="evidence" value="ECO:0007669"/>
    <property type="project" value="Ensembl"/>
</dbReference>
<dbReference type="GO" id="GO:0035116">
    <property type="term" value="P:embryonic hindlimb morphogenesis"/>
    <property type="evidence" value="ECO:0007669"/>
    <property type="project" value="Ensembl"/>
</dbReference>
<dbReference type="GO" id="GO:0010481">
    <property type="term" value="P:epidermal cell division"/>
    <property type="evidence" value="ECO:0007669"/>
    <property type="project" value="Ensembl"/>
</dbReference>
<dbReference type="GO" id="GO:0002064">
    <property type="term" value="P:epithelial cell development"/>
    <property type="evidence" value="ECO:0007669"/>
    <property type="project" value="Ensembl"/>
</dbReference>
<dbReference type="GO" id="GO:0001736">
    <property type="term" value="P:establishment of planar polarity"/>
    <property type="evidence" value="ECO:0007669"/>
    <property type="project" value="Ensembl"/>
</dbReference>
<dbReference type="GO" id="GO:0061436">
    <property type="term" value="P:establishment of skin barrier"/>
    <property type="evidence" value="ECO:0000250"/>
    <property type="project" value="UniProtKB"/>
</dbReference>
<dbReference type="GO" id="GO:0048807">
    <property type="term" value="P:female genitalia morphogenesis"/>
    <property type="evidence" value="ECO:0007669"/>
    <property type="project" value="Ensembl"/>
</dbReference>
<dbReference type="GO" id="GO:0031069">
    <property type="term" value="P:hair follicle morphogenesis"/>
    <property type="evidence" value="ECO:0007669"/>
    <property type="project" value="Ensembl"/>
</dbReference>
<dbReference type="GO" id="GO:0042771">
    <property type="term" value="P:intrinsic apoptotic signaling pathway in response to DNA damage by p53 class mediator"/>
    <property type="evidence" value="ECO:0007669"/>
    <property type="project" value="Ensembl"/>
</dbReference>
<dbReference type="GO" id="GO:0030216">
    <property type="term" value="P:keratinocyte differentiation"/>
    <property type="evidence" value="ECO:0007669"/>
    <property type="project" value="Ensembl"/>
</dbReference>
<dbReference type="GO" id="GO:0043616">
    <property type="term" value="P:keratinocyte proliferation"/>
    <property type="evidence" value="ECO:0007669"/>
    <property type="project" value="Ensembl"/>
</dbReference>
<dbReference type="GO" id="GO:2000773">
    <property type="term" value="P:negative regulation of cellular senescence"/>
    <property type="evidence" value="ECO:0000315"/>
    <property type="project" value="UniProtKB"/>
</dbReference>
<dbReference type="GO" id="GO:0045892">
    <property type="term" value="P:negative regulation of DNA-templated transcription"/>
    <property type="evidence" value="ECO:0000314"/>
    <property type="project" value="UniProtKB"/>
</dbReference>
<dbReference type="GO" id="GO:0033147">
    <property type="term" value="P:negative regulation of intracellular estrogen receptor signaling pathway"/>
    <property type="evidence" value="ECO:0007669"/>
    <property type="project" value="Ensembl"/>
</dbReference>
<dbReference type="GO" id="GO:0045617">
    <property type="term" value="P:negative regulation of keratinocyte differentiation"/>
    <property type="evidence" value="ECO:0007669"/>
    <property type="project" value="Ensembl"/>
</dbReference>
<dbReference type="GO" id="GO:2000381">
    <property type="term" value="P:negative regulation of mesoderm development"/>
    <property type="evidence" value="ECO:0007669"/>
    <property type="project" value="Ensembl"/>
</dbReference>
<dbReference type="GO" id="GO:0000122">
    <property type="term" value="P:negative regulation of transcription by RNA polymerase II"/>
    <property type="evidence" value="ECO:0007669"/>
    <property type="project" value="Ensembl"/>
</dbReference>
<dbReference type="GO" id="GO:0051402">
    <property type="term" value="P:neuron apoptotic process"/>
    <property type="evidence" value="ECO:0007669"/>
    <property type="project" value="Ensembl"/>
</dbReference>
<dbReference type="GO" id="GO:0007219">
    <property type="term" value="P:Notch signaling pathway"/>
    <property type="evidence" value="ECO:0007669"/>
    <property type="project" value="UniProtKB-KW"/>
</dbReference>
<dbReference type="GO" id="GO:0042475">
    <property type="term" value="P:odontogenesis of dentin-containing tooth"/>
    <property type="evidence" value="ECO:0007669"/>
    <property type="project" value="Ensembl"/>
</dbReference>
<dbReference type="GO" id="GO:0030859">
    <property type="term" value="P:polarized epithelial cell differentiation"/>
    <property type="evidence" value="ECO:0007669"/>
    <property type="project" value="Ensembl"/>
</dbReference>
<dbReference type="GO" id="GO:2001235">
    <property type="term" value="P:positive regulation of apoptotic signaling pathway"/>
    <property type="evidence" value="ECO:0007669"/>
    <property type="project" value="Ensembl"/>
</dbReference>
<dbReference type="GO" id="GO:1902808">
    <property type="term" value="P:positive regulation of cell cycle G1/S phase transition"/>
    <property type="evidence" value="ECO:0000315"/>
    <property type="project" value="UniProtKB"/>
</dbReference>
<dbReference type="GO" id="GO:0045893">
    <property type="term" value="P:positive regulation of DNA-templated transcription"/>
    <property type="evidence" value="ECO:0000314"/>
    <property type="project" value="UniProtKB"/>
</dbReference>
<dbReference type="GO" id="GO:2000271">
    <property type="term" value="P:positive regulation of fibroblast apoptotic process"/>
    <property type="evidence" value="ECO:0000314"/>
    <property type="project" value="UniProtKB"/>
</dbReference>
<dbReference type="GO" id="GO:0010838">
    <property type="term" value="P:positive regulation of keratinocyte proliferation"/>
    <property type="evidence" value="ECO:0007669"/>
    <property type="project" value="Ensembl"/>
</dbReference>
<dbReference type="GO" id="GO:0045747">
    <property type="term" value="P:positive regulation of Notch signaling pathway"/>
    <property type="evidence" value="ECO:0000314"/>
    <property type="project" value="UniProtKB"/>
</dbReference>
<dbReference type="GO" id="GO:0045669">
    <property type="term" value="P:positive regulation of osteoblast differentiation"/>
    <property type="evidence" value="ECO:0000315"/>
    <property type="project" value="BHF-UCL"/>
</dbReference>
<dbReference type="GO" id="GO:1904674">
    <property type="term" value="P:positive regulation of somatic stem cell population maintenance"/>
    <property type="evidence" value="ECO:0007669"/>
    <property type="project" value="Ensembl"/>
</dbReference>
<dbReference type="GO" id="GO:2000648">
    <property type="term" value="P:positive regulation of stem cell proliferation"/>
    <property type="evidence" value="ECO:0007669"/>
    <property type="project" value="Ensembl"/>
</dbReference>
<dbReference type="GO" id="GO:0045944">
    <property type="term" value="P:positive regulation of transcription by RNA polymerase II"/>
    <property type="evidence" value="ECO:0000314"/>
    <property type="project" value="BHF-UCL"/>
</dbReference>
<dbReference type="GO" id="GO:0036342">
    <property type="term" value="P:post-anal tail morphogenesis"/>
    <property type="evidence" value="ECO:0007669"/>
    <property type="project" value="Ensembl"/>
</dbReference>
<dbReference type="GO" id="GO:0060513">
    <property type="term" value="P:prostatic bud formation"/>
    <property type="evidence" value="ECO:0007669"/>
    <property type="project" value="Ensembl"/>
</dbReference>
<dbReference type="GO" id="GO:0051262">
    <property type="term" value="P:protein tetramerization"/>
    <property type="evidence" value="ECO:0007669"/>
    <property type="project" value="InterPro"/>
</dbReference>
<dbReference type="GO" id="GO:0009954">
    <property type="term" value="P:proximal/distal pattern formation"/>
    <property type="evidence" value="ECO:0007669"/>
    <property type="project" value="Ensembl"/>
</dbReference>
<dbReference type="GO" id="GO:0010482">
    <property type="term" value="P:regulation of epidermal cell division"/>
    <property type="evidence" value="ECO:0000250"/>
    <property type="project" value="UniProtKB"/>
</dbReference>
<dbReference type="GO" id="GO:0006357">
    <property type="term" value="P:regulation of transcription by RNA polymerase II"/>
    <property type="evidence" value="ECO:0000318"/>
    <property type="project" value="GO_Central"/>
</dbReference>
<dbReference type="GO" id="GO:0001501">
    <property type="term" value="P:skeletal system development"/>
    <property type="evidence" value="ECO:0007669"/>
    <property type="project" value="Ensembl"/>
</dbReference>
<dbReference type="GO" id="GO:0043589">
    <property type="term" value="P:skin morphogenesis"/>
    <property type="evidence" value="ECO:0007669"/>
    <property type="project" value="Ensembl"/>
</dbReference>
<dbReference type="GO" id="GO:0007283">
    <property type="term" value="P:spermatogenesis"/>
    <property type="evidence" value="ECO:0007669"/>
    <property type="project" value="Ensembl"/>
</dbReference>
<dbReference type="GO" id="GO:0060529">
    <property type="term" value="P:squamous basal epithelial stem cell differentiation involved in prostate gland acinus development"/>
    <property type="evidence" value="ECO:0007669"/>
    <property type="project" value="Ensembl"/>
</dbReference>
<dbReference type="GO" id="GO:0072089">
    <property type="term" value="P:stem cell proliferation"/>
    <property type="evidence" value="ECO:0007669"/>
    <property type="project" value="Ensembl"/>
</dbReference>
<dbReference type="GO" id="GO:0048485">
    <property type="term" value="P:sympathetic nervous system development"/>
    <property type="evidence" value="ECO:0007669"/>
    <property type="project" value="Ensembl"/>
</dbReference>
<dbReference type="GO" id="GO:0006366">
    <property type="term" value="P:transcription by RNA polymerase II"/>
    <property type="evidence" value="ECO:0007669"/>
    <property type="project" value="Ensembl"/>
</dbReference>
<dbReference type="CDD" id="cd08367">
    <property type="entry name" value="P53"/>
    <property type="match status" value="1"/>
</dbReference>
<dbReference type="CDD" id="cd09572">
    <property type="entry name" value="SAM_tumor-p63"/>
    <property type="match status" value="1"/>
</dbReference>
<dbReference type="FunFam" id="2.60.40.720:FF:000002">
    <property type="entry name" value="Cellular tumor antigen p53"/>
    <property type="match status" value="1"/>
</dbReference>
<dbReference type="FunFam" id="4.10.170.10:FF:000001">
    <property type="entry name" value="Cellular tumor antigen p53"/>
    <property type="match status" value="1"/>
</dbReference>
<dbReference type="FunFam" id="1.10.150.50:FF:000020">
    <property type="entry name" value="Tumor protein 63 (p63)"/>
    <property type="match status" value="1"/>
</dbReference>
<dbReference type="Gene3D" id="2.60.40.720">
    <property type="match status" value="1"/>
</dbReference>
<dbReference type="Gene3D" id="4.10.170.10">
    <property type="entry name" value="p53-like tetramerisation domain"/>
    <property type="match status" value="1"/>
</dbReference>
<dbReference type="Gene3D" id="1.10.150.50">
    <property type="entry name" value="Transcription Factor, Ets-1"/>
    <property type="match status" value="1"/>
</dbReference>
<dbReference type="InterPro" id="IPR008967">
    <property type="entry name" value="p53-like_TF_DNA-bd_sf"/>
</dbReference>
<dbReference type="InterPro" id="IPR012346">
    <property type="entry name" value="p53/RUNT-type_TF_DNA-bd_sf"/>
</dbReference>
<dbReference type="InterPro" id="IPR011615">
    <property type="entry name" value="p53_DNA-bd"/>
</dbReference>
<dbReference type="InterPro" id="IPR036674">
    <property type="entry name" value="p53_tetramer_sf"/>
</dbReference>
<dbReference type="InterPro" id="IPR010991">
    <property type="entry name" value="p53_tetrameristn"/>
</dbReference>
<dbReference type="InterPro" id="IPR002117">
    <property type="entry name" value="p53_tumour_suppressor"/>
</dbReference>
<dbReference type="InterPro" id="IPR001660">
    <property type="entry name" value="SAM"/>
</dbReference>
<dbReference type="InterPro" id="IPR013761">
    <property type="entry name" value="SAM/pointed_sf"/>
</dbReference>
<dbReference type="InterPro" id="IPR037611">
    <property type="entry name" value="Tumor-p63_SAM"/>
</dbReference>
<dbReference type="PANTHER" id="PTHR11447">
    <property type="entry name" value="CELLULAR TUMOR ANTIGEN P53"/>
    <property type="match status" value="1"/>
</dbReference>
<dbReference type="PANTHER" id="PTHR11447:SF8">
    <property type="entry name" value="TUMOR PROTEIN 63"/>
    <property type="match status" value="1"/>
</dbReference>
<dbReference type="Pfam" id="PF00870">
    <property type="entry name" value="P53"/>
    <property type="match status" value="1"/>
</dbReference>
<dbReference type="Pfam" id="PF07710">
    <property type="entry name" value="P53_tetramer"/>
    <property type="match status" value="1"/>
</dbReference>
<dbReference type="Pfam" id="PF07647">
    <property type="entry name" value="SAM_2"/>
    <property type="match status" value="1"/>
</dbReference>
<dbReference type="PRINTS" id="PR00386">
    <property type="entry name" value="P53SUPPRESSR"/>
</dbReference>
<dbReference type="SMART" id="SM00454">
    <property type="entry name" value="SAM"/>
    <property type="match status" value="1"/>
</dbReference>
<dbReference type="SUPFAM" id="SSF47719">
    <property type="entry name" value="p53 tetramerization domain"/>
    <property type="match status" value="1"/>
</dbReference>
<dbReference type="SUPFAM" id="SSF49417">
    <property type="entry name" value="p53-like transcription factors"/>
    <property type="match status" value="1"/>
</dbReference>
<dbReference type="SUPFAM" id="SSF47769">
    <property type="entry name" value="SAM/Pointed domain"/>
    <property type="match status" value="1"/>
</dbReference>
<dbReference type="PROSITE" id="PS00348">
    <property type="entry name" value="P53"/>
    <property type="match status" value="1"/>
</dbReference>
<organism>
    <name type="scientific">Homo sapiens</name>
    <name type="common">Human</name>
    <dbReference type="NCBI Taxonomy" id="9606"/>
    <lineage>
        <taxon>Eukaryota</taxon>
        <taxon>Metazoa</taxon>
        <taxon>Chordata</taxon>
        <taxon>Craniata</taxon>
        <taxon>Vertebrata</taxon>
        <taxon>Euteleostomi</taxon>
        <taxon>Mammalia</taxon>
        <taxon>Eutheria</taxon>
        <taxon>Euarchontoglires</taxon>
        <taxon>Primates</taxon>
        <taxon>Haplorrhini</taxon>
        <taxon>Catarrhini</taxon>
        <taxon>Hominidae</taxon>
        <taxon>Homo</taxon>
    </lineage>
</organism>